<gene>
    <name evidence="39" type="primary">SMARCA4</name>
    <name type="synonym">BAF190A</name>
    <name evidence="32 33 36" type="synonym">BRG1</name>
    <name type="synonym">SNF2B</name>
    <name type="synonym">SNF2L4</name>
</gene>
<organism>
    <name type="scientific">Homo sapiens</name>
    <name type="common">Human</name>
    <dbReference type="NCBI Taxonomy" id="9606"/>
    <lineage>
        <taxon>Eukaryota</taxon>
        <taxon>Metazoa</taxon>
        <taxon>Chordata</taxon>
        <taxon>Craniata</taxon>
        <taxon>Vertebrata</taxon>
        <taxon>Euteleostomi</taxon>
        <taxon>Mammalia</taxon>
        <taxon>Eutheria</taxon>
        <taxon>Euarchontoglires</taxon>
        <taxon>Primates</taxon>
        <taxon>Haplorrhini</taxon>
        <taxon>Catarrhini</taxon>
        <taxon>Hominidae</taxon>
        <taxon>Homo</taxon>
    </lineage>
</organism>
<evidence type="ECO:0000250" key="1"/>
<evidence type="ECO:0000250" key="2">
    <source>
        <dbReference type="UniProtKB" id="Q3TKT4"/>
    </source>
</evidence>
<evidence type="ECO:0000250" key="3">
    <source>
        <dbReference type="UniProtKB" id="Q6DIC0"/>
    </source>
</evidence>
<evidence type="ECO:0000250" key="4">
    <source>
        <dbReference type="UniProtKB" id="Q8K1P7"/>
    </source>
</evidence>
<evidence type="ECO:0000255" key="5">
    <source>
        <dbReference type="PROSITE-ProRule" id="PRU00035"/>
    </source>
</evidence>
<evidence type="ECO:0000255" key="6">
    <source>
        <dbReference type="PROSITE-ProRule" id="PRU00541"/>
    </source>
</evidence>
<evidence type="ECO:0000255" key="7">
    <source>
        <dbReference type="PROSITE-ProRule" id="PRU00542"/>
    </source>
</evidence>
<evidence type="ECO:0000255" key="8">
    <source>
        <dbReference type="PROSITE-ProRule" id="PRU00549"/>
    </source>
</evidence>
<evidence type="ECO:0000255" key="9">
    <source>
        <dbReference type="PROSITE-ProRule" id="PRU01001"/>
    </source>
</evidence>
<evidence type="ECO:0000256" key="10">
    <source>
        <dbReference type="SAM" id="MobiDB-lite"/>
    </source>
</evidence>
<evidence type="ECO:0000269" key="11">
    <source>
    </source>
</evidence>
<evidence type="ECO:0000269" key="12">
    <source>
    </source>
</evidence>
<evidence type="ECO:0000269" key="13">
    <source>
    </source>
</evidence>
<evidence type="ECO:0000269" key="14">
    <source>
    </source>
</evidence>
<evidence type="ECO:0000269" key="15">
    <source>
    </source>
</evidence>
<evidence type="ECO:0000269" key="16">
    <source>
    </source>
</evidence>
<evidence type="ECO:0000269" key="17">
    <source>
    </source>
</evidence>
<evidence type="ECO:0000269" key="18">
    <source>
    </source>
</evidence>
<evidence type="ECO:0000269" key="19">
    <source>
    </source>
</evidence>
<evidence type="ECO:0000269" key="20">
    <source>
    </source>
</evidence>
<evidence type="ECO:0000269" key="21">
    <source>
    </source>
</evidence>
<evidence type="ECO:0000269" key="22">
    <source>
    </source>
</evidence>
<evidence type="ECO:0000269" key="23">
    <source>
    </source>
</evidence>
<evidence type="ECO:0000269" key="24">
    <source>
    </source>
</evidence>
<evidence type="ECO:0000269" key="25">
    <source>
    </source>
</evidence>
<evidence type="ECO:0000269" key="26">
    <source>
    </source>
</evidence>
<evidence type="ECO:0000269" key="27">
    <source>
    </source>
</evidence>
<evidence type="ECO:0000269" key="28">
    <source>
    </source>
</evidence>
<evidence type="ECO:0000269" key="29">
    <source>
    </source>
</evidence>
<evidence type="ECO:0000269" key="30">
    <source>
    </source>
</evidence>
<evidence type="ECO:0000269" key="31">
    <source>
    </source>
</evidence>
<evidence type="ECO:0000303" key="32">
    <source>
    </source>
</evidence>
<evidence type="ECO:0000303" key="33">
    <source>
    </source>
</evidence>
<evidence type="ECO:0000303" key="34">
    <source>
    </source>
</evidence>
<evidence type="ECO:0000303" key="35">
    <source>
    </source>
</evidence>
<evidence type="ECO:0000303" key="36">
    <source>
    </source>
</evidence>
<evidence type="ECO:0000305" key="37"/>
<evidence type="ECO:0000305" key="38">
    <source>
    </source>
</evidence>
<evidence type="ECO:0000312" key="39">
    <source>
        <dbReference type="HGNC" id="HGNC:11100"/>
    </source>
</evidence>
<evidence type="ECO:0007744" key="40">
    <source>
        <dbReference type="PDB" id="6BGH"/>
    </source>
</evidence>
<evidence type="ECO:0007744" key="41">
    <source>
    </source>
</evidence>
<evidence type="ECO:0007744" key="42">
    <source>
    </source>
</evidence>
<evidence type="ECO:0007744" key="43">
    <source>
    </source>
</evidence>
<evidence type="ECO:0007744" key="44">
    <source>
    </source>
</evidence>
<evidence type="ECO:0007744" key="45">
    <source>
    </source>
</evidence>
<evidence type="ECO:0007744" key="46">
    <source>
    </source>
</evidence>
<evidence type="ECO:0007744" key="47">
    <source>
    </source>
</evidence>
<evidence type="ECO:0007744" key="48">
    <source>
    </source>
</evidence>
<evidence type="ECO:0007744" key="49">
    <source>
    </source>
</evidence>
<evidence type="ECO:0007829" key="50">
    <source>
        <dbReference type="PDB" id="2H60"/>
    </source>
</evidence>
<evidence type="ECO:0007829" key="51">
    <source>
        <dbReference type="PDB" id="5EA1"/>
    </source>
</evidence>
<evidence type="ECO:0007829" key="52">
    <source>
        <dbReference type="PDB" id="6LTH"/>
    </source>
</evidence>
<evidence type="ECO:0007829" key="53">
    <source>
        <dbReference type="PDB" id="6SY2"/>
    </source>
</evidence>
<evidence type="ECO:0007829" key="54">
    <source>
        <dbReference type="PDB" id="7TAB"/>
    </source>
</evidence>
<evidence type="ECO:0007829" key="55">
    <source>
        <dbReference type="PDB" id="7VDT"/>
    </source>
</evidence>
<evidence type="ECO:0007829" key="56">
    <source>
        <dbReference type="PDB" id="7VDV"/>
    </source>
</evidence>
<evidence type="ECO:0007829" key="57">
    <source>
        <dbReference type="PDB" id="7VRB"/>
    </source>
</evidence>
<accession>P51532</accession>
<accession>B1A8Z4</accession>
<accession>B1A8Z5</accession>
<accession>B1A8Z6</accession>
<accession>B1A8Z7</accession>
<accession>E9PBR8</accession>
<accession>O95052</accession>
<accession>Q9HBD3</accession>
<sequence length="1647" mass="184646">MSTPDPPLGGTPRPGPSPGPGPSPGAMLGPSPGPSPGSAHSMMGPSPGPPSAGHPIPTQGPGGYPQDNMHQMHKPMESMHEKGMSDDPRYNQMKGMGMRSGGHAGMGPPPSPMDQHSQGYPSPLGGSEHASSPVPASGPSSGPQMSSGPGGAPLDGADPQALGQQNRGPTPFNQNQLHQLRAQIMAYKMLARGQPLPDHLQMAVQGKRPMPGMQQQMPTLPPPSVSATGPGPGPGPGPGPGPGPAPPNYSRPHGMGGPNMPPPGPSGVPPGMPGQPPGGPPKPWPEGPMANAAAPTSTPQKLIPPQPTGRPSPAPPAVPPAASPVMPPQTQSPGQPAQPAPMVPLHQKQSRITPIQKPRGLDPVEILQEREYRLQARIAHRIQELENLPGSLAGDLRTKATIELKALRLLNFQRQLRQEVVVCMRRDTALETALNAKAYKRSKRQSLREARITEKLEKQQKIEQERKRRQKHQEYLNSILQHAKDFKEYHRSVTGKIQKLTKAVATYHANTEREQKKENERIEKERMRRLMAEDEEGYRKLIDQKKDKRLAYLLQQTDEYVANLTELVRQHKAAQVAKEKKKKKKKKKAENAEGQTPAIGPDGEPLDETSQMSDLPVKVIHVESGKILTGTDAPKAGQLEAWLEMNPGYEVAPRSDSEESGSEEEEEEEEEEQPQAAQPPTLPVEEKKKIPDPDSDDVSEVDARHIIENAKQDVDDEYGVSQALARGLQSYYAVAHAVTERVDKQSALMVNGVLKQYQIKGLEWLVSLYNNNLNGILADEMGLGKTIQTIALITYLMEHKRINGPFLIIVPLSTLSNWAYEFDKWAPSVVKVSYKGSPAARRAFVPQLRSGKFNVLLTTYEYIIKDKHILAKIRWKYMIVDEGHRMKNHHCKLTQVLNTHYVAPRRLLLTGTPLQNKLPELWALLNFLLPTIFKSCSTFEQWFNAPFAMTGEKVDLNEEETILIIRRLHKVLRPFLLRRLKKEVEAQLPEKVEYVIKCDMSALQRVLYRHMQAKGVLLTDGSEKDKKGKGGTKTLMNTIMQLRKICNHPYMFQHIEESFSEHLGFTGGIVQGLDLYRASGKFELLDRILPKLRATNHKVLLFCQMTSLMTIMEDYFAYRGFKYLRLDGTTKAEDRGMLLKTFNEPGSEYFIFLLSTRAGGLGLNLQSADTVIIFDSDWNPHQDLQAQDRAHRIGQQNEVRVLRLCTVNSVEEKILAAAKYKLNVDQKVIQAGMFDQKSSSHERRAFLQAILEHEEQDESRHCSTGSGSASFAHTAPPPAGVNPDLEEPPLKEEDEVPDDETVNQMIARHEEEFDLFMRMDLDRRREEARNPKRKPRLMEEDELPSWIIKDDAEVERLTCEEEEEKMFGRGSRHRKEVDYSDSLTEKQWLKAIEEGTLEEIEEEVRQKKSSRKRKRDSDAGSSTPTTSTRSRDKDDESKKQKKRGRPPAEKLSPNPPNLTKKMKKIVDAVIKYKDSSSGRQLSEVFIQLPSRKELPEYYELIRKPVDFKKIKERIRNHKYRSLNDLEKDVMLLCQNAQTFNLEGSLIYEDSIVLQSVFTSVRQKIEKEDDSEGEESEEEEEGEEEGSESESRSVKVKIKLGRKEKAQDRLKGGRRRPSRGSRAKPVVSDDDSEEEQEEDRSGSGSEED</sequence>
<dbReference type="EC" id="3.6.4.-" evidence="28"/>
<dbReference type="EMBL" id="U29175">
    <property type="protein sequence ID" value="AAB40977.1"/>
    <property type="molecule type" value="mRNA"/>
</dbReference>
<dbReference type="EMBL" id="D26156">
    <property type="protein sequence ID" value="BAA05143.1"/>
    <property type="molecule type" value="mRNA"/>
</dbReference>
<dbReference type="EMBL" id="AF254822">
    <property type="protein sequence ID" value="AAG24789.1"/>
    <property type="molecule type" value="Genomic_DNA"/>
</dbReference>
<dbReference type="EMBL" id="EU430756">
    <property type="protein sequence ID" value="ACA09750.1"/>
    <property type="molecule type" value="mRNA"/>
</dbReference>
<dbReference type="EMBL" id="EU430757">
    <property type="protein sequence ID" value="ACA09751.1"/>
    <property type="molecule type" value="mRNA"/>
</dbReference>
<dbReference type="EMBL" id="EU430758">
    <property type="protein sequence ID" value="ACA09752.1"/>
    <property type="molecule type" value="mRNA"/>
</dbReference>
<dbReference type="EMBL" id="EU430759">
    <property type="protein sequence ID" value="ACA09753.1"/>
    <property type="molecule type" value="mRNA"/>
</dbReference>
<dbReference type="EMBL" id="AC006127">
    <property type="protein sequence ID" value="AAC97986.1"/>
    <property type="molecule type" value="Genomic_DNA"/>
</dbReference>
<dbReference type="EMBL" id="AC006127">
    <property type="protein sequence ID" value="AAC97987.1"/>
    <property type="molecule type" value="Genomic_DNA"/>
</dbReference>
<dbReference type="EMBL" id="AC011442">
    <property type="status" value="NOT_ANNOTATED_CDS"/>
    <property type="molecule type" value="Genomic_DNA"/>
</dbReference>
<dbReference type="EMBL" id="AC011485">
    <property type="status" value="NOT_ANNOTATED_CDS"/>
    <property type="molecule type" value="Genomic_DNA"/>
</dbReference>
<dbReference type="EMBL" id="CH471106">
    <property type="protein sequence ID" value="EAW84167.1"/>
    <property type="molecule type" value="Genomic_DNA"/>
</dbReference>
<dbReference type="CCDS" id="CCDS12253.1">
    <molecule id="P51532-1"/>
</dbReference>
<dbReference type="CCDS" id="CCDS45972.1">
    <molecule id="P51532-4"/>
</dbReference>
<dbReference type="CCDS" id="CCDS45973.1">
    <molecule id="P51532-3"/>
</dbReference>
<dbReference type="CCDS" id="CCDS54217.1">
    <molecule id="P51532-2"/>
</dbReference>
<dbReference type="CCDS" id="CCDS54218.1">
    <molecule id="P51532-5"/>
</dbReference>
<dbReference type="PIR" id="S45252">
    <property type="entry name" value="S45252"/>
</dbReference>
<dbReference type="RefSeq" id="NP_001122316.1">
    <molecule id="P51532-1"/>
    <property type="nucleotide sequence ID" value="NM_001128844.3"/>
</dbReference>
<dbReference type="RefSeq" id="NP_001122317.1">
    <molecule id="P51532-4"/>
    <property type="nucleotide sequence ID" value="NM_001128845.2"/>
</dbReference>
<dbReference type="RefSeq" id="NP_001122318.1">
    <molecule id="P51532-3"/>
    <property type="nucleotide sequence ID" value="NM_001128846.2"/>
</dbReference>
<dbReference type="RefSeq" id="NP_001122319.1">
    <molecule id="P51532-2"/>
    <property type="nucleotide sequence ID" value="NM_001128847.4"/>
</dbReference>
<dbReference type="RefSeq" id="NP_001122320.1">
    <molecule id="P51532-5"/>
    <property type="nucleotide sequence ID" value="NM_001128848.2"/>
</dbReference>
<dbReference type="RefSeq" id="NP_001361386.1">
    <molecule id="P51532-2"/>
    <property type="nucleotide sequence ID" value="NM_001374457.1"/>
</dbReference>
<dbReference type="RefSeq" id="NP_003063.2">
    <molecule id="P51532-1"/>
    <property type="nucleotide sequence ID" value="NM_003072.3"/>
</dbReference>
<dbReference type="RefSeq" id="XP_016882654.1">
    <property type="nucleotide sequence ID" value="XM_017027165.1"/>
</dbReference>
<dbReference type="RefSeq" id="XP_016882655.1">
    <property type="nucleotide sequence ID" value="XM_017027166.1"/>
</dbReference>
<dbReference type="RefSeq" id="XP_016882656.1">
    <property type="nucleotide sequence ID" value="XM_017027167.1"/>
</dbReference>
<dbReference type="RefSeq" id="XP_016882657.1">
    <property type="nucleotide sequence ID" value="XM_017027168.1"/>
</dbReference>
<dbReference type="RefSeq" id="XP_024307435.1">
    <molecule id="P51532-5"/>
    <property type="nucleotide sequence ID" value="XM_024451667.2"/>
</dbReference>
<dbReference type="RefSeq" id="XP_047295200.1">
    <molecule id="P51532-1"/>
    <property type="nucleotide sequence ID" value="XM_047439244.1"/>
</dbReference>
<dbReference type="RefSeq" id="XP_047295203.1">
    <molecule id="P51532-2"/>
    <property type="nucleotide sequence ID" value="XM_047439247.1"/>
</dbReference>
<dbReference type="RefSeq" id="XP_047295204.1">
    <molecule id="P51532-2"/>
    <property type="nucleotide sequence ID" value="XM_047439248.1"/>
</dbReference>
<dbReference type="RefSeq" id="XP_047295205.1">
    <molecule id="P51532-5"/>
    <property type="nucleotide sequence ID" value="XM_047439249.1"/>
</dbReference>
<dbReference type="RefSeq" id="XP_047295206.1">
    <molecule id="P51532-5"/>
    <property type="nucleotide sequence ID" value="XM_047439250.1"/>
</dbReference>
<dbReference type="RefSeq" id="XP_047295207.1">
    <molecule id="P51532-5"/>
    <property type="nucleotide sequence ID" value="XM_047439251.1"/>
</dbReference>
<dbReference type="RefSeq" id="XP_054177792.1">
    <molecule id="P51532-1"/>
    <property type="nucleotide sequence ID" value="XM_054321817.1"/>
</dbReference>
<dbReference type="RefSeq" id="XP_054177796.1">
    <molecule id="P51532-2"/>
    <property type="nucleotide sequence ID" value="XM_054321821.1"/>
</dbReference>
<dbReference type="RefSeq" id="XP_054177797.1">
    <molecule id="P51532-2"/>
    <property type="nucleotide sequence ID" value="XM_054321822.1"/>
</dbReference>
<dbReference type="RefSeq" id="XP_054177798.1">
    <molecule id="P51532-5"/>
    <property type="nucleotide sequence ID" value="XM_054321823.1"/>
</dbReference>
<dbReference type="RefSeq" id="XP_054177799.1">
    <molecule id="P51532-5"/>
    <property type="nucleotide sequence ID" value="XM_054321824.1"/>
</dbReference>
<dbReference type="RefSeq" id="XP_054177800.1">
    <molecule id="P51532-5"/>
    <property type="nucleotide sequence ID" value="XM_054321825.1"/>
</dbReference>
<dbReference type="RefSeq" id="XP_054177801.1">
    <molecule id="P51532-5"/>
    <property type="nucleotide sequence ID" value="XM_054321826.1"/>
</dbReference>
<dbReference type="PDB" id="2GRC">
    <property type="method" value="X-ray"/>
    <property type="resolution" value="1.50 A"/>
    <property type="chains" value="A=1448-1575"/>
</dbReference>
<dbReference type="PDB" id="2H60">
    <property type="method" value="NMR"/>
    <property type="chains" value="A=1452-1570"/>
</dbReference>
<dbReference type="PDB" id="3UVD">
    <property type="method" value="X-ray"/>
    <property type="resolution" value="1.85 A"/>
    <property type="chains" value="A=1448-1569"/>
</dbReference>
<dbReference type="PDB" id="5DKD">
    <property type="method" value="X-ray"/>
    <property type="resolution" value="2.00 A"/>
    <property type="chains" value="A/B=1451-1569"/>
</dbReference>
<dbReference type="PDB" id="5EA1">
    <property type="method" value="X-ray"/>
    <property type="resolution" value="2.00 A"/>
    <property type="chains" value="A/B/C=1451-1580"/>
</dbReference>
<dbReference type="PDB" id="6BGH">
    <property type="method" value="NMR"/>
    <property type="chains" value="B=1591-1602"/>
</dbReference>
<dbReference type="PDB" id="6HR2">
    <property type="method" value="X-ray"/>
    <property type="resolution" value="1.76 A"/>
    <property type="chains" value="A/E=1449-1568"/>
</dbReference>
<dbReference type="PDB" id="6LTH">
    <property type="method" value="EM"/>
    <property type="resolution" value="3.00 A"/>
    <property type="chains" value="I=1-1647"/>
</dbReference>
<dbReference type="PDB" id="6LTJ">
    <property type="method" value="EM"/>
    <property type="resolution" value="3.70 A"/>
    <property type="chains" value="I=1-1647"/>
</dbReference>
<dbReference type="PDB" id="6SY2">
    <property type="method" value="NMR"/>
    <property type="chains" value="A=610-658"/>
</dbReference>
<dbReference type="PDB" id="6ZS2">
    <property type="method" value="X-ray"/>
    <property type="resolution" value="1.57 A"/>
    <property type="chains" value="A/B=1451-1569"/>
</dbReference>
<dbReference type="PDB" id="7TAB">
    <property type="method" value="X-ray"/>
    <property type="resolution" value="1.16 A"/>
    <property type="chains" value="A=1448-1575"/>
</dbReference>
<dbReference type="PDB" id="7TD9">
    <property type="method" value="X-ray"/>
    <property type="resolution" value="1.61 A"/>
    <property type="chains" value="AAA/BBB/CCC=1448-1575"/>
</dbReference>
<dbReference type="PDB" id="7VDT">
    <property type="method" value="EM"/>
    <property type="resolution" value="2.80 A"/>
    <property type="chains" value="A=160-1647"/>
</dbReference>
<dbReference type="PDB" id="7VDV">
    <property type="method" value="EM"/>
    <property type="resolution" value="3.40 A"/>
    <property type="chains" value="A=160-1647"/>
</dbReference>
<dbReference type="PDB" id="7VRB">
    <property type="method" value="X-ray"/>
    <property type="resolution" value="2.39 A"/>
    <property type="chains" value="A/B/C/D=172-213"/>
</dbReference>
<dbReference type="PDB" id="7Y8R">
    <property type="method" value="EM"/>
    <property type="resolution" value="4.40 A"/>
    <property type="chains" value="I=1-1647"/>
</dbReference>
<dbReference type="PDB" id="8EB1">
    <property type="method" value="NMR"/>
    <property type="chains" value="A=874-878"/>
</dbReference>
<dbReference type="PDB" id="8G1Q">
    <property type="method" value="X-ray"/>
    <property type="resolution" value="3.73 A"/>
    <property type="chains" value="H=1447-1569"/>
</dbReference>
<dbReference type="PDB" id="8QJR">
    <property type="method" value="X-ray"/>
    <property type="resolution" value="3.17 A"/>
    <property type="chains" value="G/H=1451-1569"/>
</dbReference>
<dbReference type="PDBsum" id="2GRC"/>
<dbReference type="PDBsum" id="2H60"/>
<dbReference type="PDBsum" id="3UVD"/>
<dbReference type="PDBsum" id="5DKD"/>
<dbReference type="PDBsum" id="5EA1"/>
<dbReference type="PDBsum" id="6BGH"/>
<dbReference type="PDBsum" id="6HR2"/>
<dbReference type="PDBsum" id="6LTH"/>
<dbReference type="PDBsum" id="6LTJ"/>
<dbReference type="PDBsum" id="6SY2"/>
<dbReference type="PDBsum" id="6ZS2"/>
<dbReference type="PDBsum" id="7TAB"/>
<dbReference type="PDBsum" id="7TD9"/>
<dbReference type="PDBsum" id="7VDT"/>
<dbReference type="PDBsum" id="7VDV"/>
<dbReference type="PDBsum" id="7VRB"/>
<dbReference type="PDBsum" id="7Y8R"/>
<dbReference type="PDBsum" id="8EB1"/>
<dbReference type="PDBsum" id="8G1Q"/>
<dbReference type="PDBsum" id="8QJR"/>
<dbReference type="EMDB" id="EMD-0974"/>
<dbReference type="EMDB" id="EMD-31925"/>
<dbReference type="EMDB" id="EMD-31926"/>
<dbReference type="EMDB" id="EMD-33684"/>
<dbReference type="SMR" id="P51532"/>
<dbReference type="BioGRID" id="112481">
    <property type="interactions" value="438"/>
</dbReference>
<dbReference type="ComplexPortal" id="CPX-1195">
    <property type="entry name" value="Embryonic stem cell-specific SWI/SNF ATP-dependent chromatin remodeling complex"/>
</dbReference>
<dbReference type="ComplexPortal" id="CPX-1196">
    <property type="entry name" value="Polybromo-associated SWI/SNF ATP-dependent chromatin remodeling complex, ACTL6B variant"/>
</dbReference>
<dbReference type="ComplexPortal" id="CPX-1199">
    <property type="entry name" value="Polybromo-associated SWI/SNF ATP-dependent chromatin remodeling complex, ACTL6A variant"/>
</dbReference>
<dbReference type="ComplexPortal" id="CPX-1204">
    <property type="entry name" value="SWI/SNF ATP-dependent chromatin remodeling complex, ACTL6A-ARID1A-SMARCA4 variant"/>
</dbReference>
<dbReference type="ComplexPortal" id="CPX-1206">
    <property type="entry name" value="SWI/SNF ATP-dependent chromatin remodeling complex, ACTL6A-ARID1B-SMARCA4 variant"/>
</dbReference>
<dbReference type="ComplexPortal" id="CPX-1209">
    <property type="entry name" value="SWI/SNF ATP-dependent chromatin remodeling complex, ACTL6B-ARID1A-SMARCA4 variant"/>
</dbReference>
<dbReference type="ComplexPortal" id="CPX-1211">
    <property type="entry name" value="SWI/SNF ATP-dependent chromatin remodeling complex, ACTL6B-ARID1B-SMARCA4 variant"/>
</dbReference>
<dbReference type="ComplexPortal" id="CPX-1212">
    <property type="entry name" value="Neural progenitor-specific SWI/SNF ATP-dependent chromatin remodeling complex, ARID1A-SMARCA4 variant"/>
</dbReference>
<dbReference type="ComplexPortal" id="CPX-1215">
    <property type="entry name" value="Neural progenitor-specific SWI/SNF ATP-dependent chromatin remodeling complex, ARID1B-SMARCA4 variant"/>
</dbReference>
<dbReference type="ComplexPortal" id="CPX-1216">
    <property type="entry name" value="Neuron-specific SWI/SNF ATP-dependent chromatin remodeling complex, ARID1A-SMARCA4 variant"/>
</dbReference>
<dbReference type="ComplexPortal" id="CPX-1218">
    <property type="entry name" value="Neuron-specific SWI/SNF ATP-dependent chromatin remodeling complex, ARID1B-SMARCA4 variant"/>
</dbReference>
<dbReference type="ComplexPortal" id="CPX-1219">
    <property type="entry name" value="Brain-specific SWI/SNF ATP-dependent chromatin remodeling complex, ARID1A-SMARCA4 variant"/>
</dbReference>
<dbReference type="ComplexPortal" id="CPX-1221">
    <property type="entry name" value="Brain-specific SWI/SNF ATP-dependent chromatin remodeling complex, ARID1B-SMARCA4 variant"/>
</dbReference>
<dbReference type="ComplexPortal" id="CPX-1222">
    <property type="entry name" value="Muscle cell-specific SWI/SNF ATP-dependent chromatin remodeling complex, ACTL6A-ARID1A-SMARCA4 variant"/>
</dbReference>
<dbReference type="ComplexPortal" id="CPX-1224">
    <property type="entry name" value="Muscle cell-specific SWI/SNF ATP-dependent chromatin remodeling complex, ACTL6A-ARID1B-SMARCA4 variant"/>
</dbReference>
<dbReference type="ComplexPortal" id="CPX-1226">
    <property type="entry name" value="Muscle cell-specific SWI/SNF ATP-dependent chromatin remodeling complex, ACTL6B-ARID1A-SMARCA4 variant"/>
</dbReference>
<dbReference type="ComplexPortal" id="CPX-1228">
    <property type="entry name" value="Muscle cell-specific SWI/SNF ATP-dependent chromatin remodeling complex, ACTL6B-ARID1B-SMARCA4 variant"/>
</dbReference>
<dbReference type="ComplexPortal" id="CPX-4206">
    <property type="entry name" value="GBAF (SWI/SNF) ATP-dependent chromatin remodeling complex, ACTL6A-BICRA-SMARCA4 variant"/>
</dbReference>
<dbReference type="ComplexPortal" id="CPX-4207">
    <property type="entry name" value="GBAF (SWI/SNF) ATP-dependent chromatin remodeling complex, ACTL6A-BICRAL-SMARCA4 variant"/>
</dbReference>
<dbReference type="ComplexPortal" id="CPX-4225">
    <property type="entry name" value="GBAF (SWI/SNF) ATP-dependent chromatin remodeling complex, ACTL6B-BICRA-SMARCA4 variant"/>
</dbReference>
<dbReference type="ComplexPortal" id="CPX-4226">
    <property type="entry name" value="GBAF (SWI/SNF) ATP-dependent chromatin remodeling complex, ACTL6B-BICRAL-SMARCA4 variant"/>
</dbReference>
<dbReference type="CORUM" id="P51532"/>
<dbReference type="DIP" id="DIP-24249N"/>
<dbReference type="FunCoup" id="P51532">
    <property type="interactions" value="2542"/>
</dbReference>
<dbReference type="IntAct" id="P51532">
    <property type="interactions" value="157"/>
</dbReference>
<dbReference type="MINT" id="P51532"/>
<dbReference type="STRING" id="9606.ENSP00000343896"/>
<dbReference type="BindingDB" id="P51532"/>
<dbReference type="ChEMBL" id="CHEMBL3085620"/>
<dbReference type="GuidetoPHARMACOLOGY" id="2740"/>
<dbReference type="CarbonylDB" id="P51532"/>
<dbReference type="GlyGen" id="P51532">
    <property type="glycosylation" value="2 sites, 1 O-linked glycan (2 sites)"/>
</dbReference>
<dbReference type="iPTMnet" id="P51532"/>
<dbReference type="MetOSite" id="P51532"/>
<dbReference type="PhosphoSitePlus" id="P51532"/>
<dbReference type="SwissPalm" id="P51532"/>
<dbReference type="BioMuta" id="SMARCA4"/>
<dbReference type="DMDM" id="116242792"/>
<dbReference type="CPTAC" id="CPTAC-1367"/>
<dbReference type="jPOST" id="P51532"/>
<dbReference type="MassIVE" id="P51532"/>
<dbReference type="PaxDb" id="9606-ENSP00000395654"/>
<dbReference type="PeptideAtlas" id="P51532"/>
<dbReference type="ProteomicsDB" id="56327">
    <molecule id="P51532-1"/>
</dbReference>
<dbReference type="ProteomicsDB" id="56328">
    <molecule id="P51532-2"/>
</dbReference>
<dbReference type="ProteomicsDB" id="56329">
    <molecule id="P51532-3"/>
</dbReference>
<dbReference type="ProteomicsDB" id="56330">
    <molecule id="P51532-4"/>
</dbReference>
<dbReference type="ProteomicsDB" id="56331">
    <molecule id="P51532-5"/>
</dbReference>
<dbReference type="Pumba" id="P51532"/>
<dbReference type="ABCD" id="P51532">
    <property type="antibodies" value="4 sequenced antibodies"/>
</dbReference>
<dbReference type="Antibodypedia" id="3778">
    <property type="antibodies" value="576 antibodies from 46 providers"/>
</dbReference>
<dbReference type="DNASU" id="6597"/>
<dbReference type="Ensembl" id="ENST00000344626.10">
    <molecule id="P51532-1"/>
    <property type="protein sequence ID" value="ENSP00000343896.4"/>
    <property type="gene ID" value="ENSG00000127616.22"/>
</dbReference>
<dbReference type="Ensembl" id="ENST00000429416.8">
    <molecule id="P51532-1"/>
    <property type="protein sequence ID" value="ENSP00000395654.1"/>
    <property type="gene ID" value="ENSG00000127616.22"/>
</dbReference>
<dbReference type="Ensembl" id="ENST00000444061.8">
    <molecule id="P51532-5"/>
    <property type="protein sequence ID" value="ENSP00000392837.2"/>
    <property type="gene ID" value="ENSG00000127616.22"/>
</dbReference>
<dbReference type="Ensembl" id="ENST00000541122.6">
    <molecule id="P51532-4"/>
    <property type="protein sequence ID" value="ENSP00000445036.2"/>
    <property type="gene ID" value="ENSG00000127616.22"/>
</dbReference>
<dbReference type="Ensembl" id="ENST00000589677.5">
    <molecule id="P51532-3"/>
    <property type="protein sequence ID" value="ENSP00000464778.1"/>
    <property type="gene ID" value="ENSG00000127616.22"/>
</dbReference>
<dbReference type="Ensembl" id="ENST00000590574.6">
    <molecule id="P51532-2"/>
    <property type="protein sequence ID" value="ENSP00000466963.1"/>
    <property type="gene ID" value="ENSG00000127616.22"/>
</dbReference>
<dbReference type="Ensembl" id="ENST00000643296.1">
    <molecule id="P51532-4"/>
    <property type="protein sequence ID" value="ENSP00000496635.1"/>
    <property type="gene ID" value="ENSG00000127616.22"/>
</dbReference>
<dbReference type="Ensembl" id="ENST00000644737.1">
    <molecule id="P51532-4"/>
    <property type="protein sequence ID" value="ENSP00000495548.1"/>
    <property type="gene ID" value="ENSG00000127616.22"/>
</dbReference>
<dbReference type="Ensembl" id="ENST00000645460.1">
    <molecule id="P51532-5"/>
    <property type="protein sequence ID" value="ENSP00000494463.1"/>
    <property type="gene ID" value="ENSG00000127616.22"/>
</dbReference>
<dbReference type="Ensembl" id="ENST00000646484.1">
    <molecule id="P51532-2"/>
    <property type="protein sequence ID" value="ENSP00000495536.1"/>
    <property type="gene ID" value="ENSG00000127616.22"/>
</dbReference>
<dbReference type="Ensembl" id="ENST00000646510.1">
    <molecule id="P51532-2"/>
    <property type="protein sequence ID" value="ENSP00000494772.1"/>
    <property type="gene ID" value="ENSG00000127616.22"/>
</dbReference>
<dbReference type="Ensembl" id="ENST00000647230.1">
    <molecule id="P51532-2"/>
    <property type="protein sequence ID" value="ENSP00000494676.1"/>
    <property type="gene ID" value="ENSG00000127616.22"/>
</dbReference>
<dbReference type="GeneID" id="6597"/>
<dbReference type="KEGG" id="hsa:6597"/>
<dbReference type="MANE-Select" id="ENST00000344626.10">
    <property type="protein sequence ID" value="ENSP00000343896.4"/>
    <property type="RefSeq nucleotide sequence ID" value="NM_003072.5"/>
    <property type="RefSeq protein sequence ID" value="NP_003063.2"/>
</dbReference>
<dbReference type="UCSC" id="uc002mqf.5">
    <molecule id="P51532-1"/>
    <property type="organism name" value="human"/>
</dbReference>
<dbReference type="AGR" id="HGNC:11100"/>
<dbReference type="CTD" id="6597"/>
<dbReference type="DisGeNET" id="6597"/>
<dbReference type="GeneCards" id="SMARCA4"/>
<dbReference type="GeneReviews" id="SMARCA4"/>
<dbReference type="HGNC" id="HGNC:11100">
    <property type="gene designation" value="SMARCA4"/>
</dbReference>
<dbReference type="HPA" id="ENSG00000127616">
    <property type="expression patterns" value="Low tissue specificity"/>
</dbReference>
<dbReference type="MalaCards" id="SMARCA4"/>
<dbReference type="MIM" id="603254">
    <property type="type" value="gene"/>
</dbReference>
<dbReference type="MIM" id="613325">
    <property type="type" value="phenotype"/>
</dbReference>
<dbReference type="MIM" id="614609">
    <property type="type" value="phenotype"/>
</dbReference>
<dbReference type="MIM" id="620792">
    <property type="type" value="phenotype"/>
</dbReference>
<dbReference type="neXtProt" id="NX_P51532"/>
<dbReference type="OpenTargets" id="ENSG00000127616"/>
<dbReference type="Orphanet" id="1465">
    <property type="disease" value="Coffin-Siris syndrome"/>
</dbReference>
<dbReference type="Orphanet" id="231108">
    <property type="disease" value="Rhabdoid tumor predisposition syndrome"/>
</dbReference>
<dbReference type="Orphanet" id="370396">
    <property type="disease" value="Small cell carcinoma of the ovary"/>
</dbReference>
<dbReference type="Orphanet" id="466962">
    <property type="disease" value="SMARCA4-deficient sarcoma of thorax"/>
</dbReference>
<dbReference type="PharmGKB" id="PA35950"/>
<dbReference type="VEuPathDB" id="HostDB:ENSG00000127616"/>
<dbReference type="eggNOG" id="KOG0386">
    <property type="taxonomic scope" value="Eukaryota"/>
</dbReference>
<dbReference type="GeneTree" id="ENSGT00940000156887"/>
<dbReference type="HOGENOM" id="CLU_000315_15_0_1"/>
<dbReference type="InParanoid" id="P51532"/>
<dbReference type="OMA" id="YGPGHKL"/>
<dbReference type="OrthoDB" id="6017at2759"/>
<dbReference type="PAN-GO" id="P51532">
    <property type="GO annotations" value="5 GO annotations based on evolutionary models"/>
</dbReference>
<dbReference type="PhylomeDB" id="P51532"/>
<dbReference type="PathwayCommons" id="P51532"/>
<dbReference type="Reactome" id="R-HSA-1266695">
    <property type="pathway name" value="Interleukin-7 signaling"/>
</dbReference>
<dbReference type="Reactome" id="R-HSA-201722">
    <property type="pathway name" value="Formation of the beta-catenin:TCF transactivating complex"/>
</dbReference>
<dbReference type="Reactome" id="R-HSA-3214858">
    <property type="pathway name" value="RMTs methylate histone arginines"/>
</dbReference>
<dbReference type="Reactome" id="R-HSA-3247509">
    <property type="pathway name" value="Chromatin modifying enzymes"/>
</dbReference>
<dbReference type="Reactome" id="R-HSA-8939243">
    <property type="pathway name" value="RUNX1 interacts with co-factors whose precise effect on RUNX1 targets is not known"/>
</dbReference>
<dbReference type="Reactome" id="R-HSA-9619665">
    <property type="pathway name" value="EGR2 and SOX10-mediated initiation of Schwann cell myelination"/>
</dbReference>
<dbReference type="Reactome" id="R-HSA-9824585">
    <property type="pathway name" value="Regulation of MITF-M-dependent genes involved in pigmentation"/>
</dbReference>
<dbReference type="Reactome" id="R-HSA-9845323">
    <property type="pathway name" value="Regulation of endogenous retroelements by Piwi-interacting RNAs (piRNAs)"/>
</dbReference>
<dbReference type="SignaLink" id="P51532"/>
<dbReference type="SIGNOR" id="P51532"/>
<dbReference type="BioGRID-ORCS" id="6597">
    <property type="hits" value="222 hits in 1208 CRISPR screens"/>
</dbReference>
<dbReference type="CD-CODE" id="1A18FFC4">
    <property type="entry name" value="Paraspeckle"/>
</dbReference>
<dbReference type="CD-CODE" id="804901D1">
    <property type="entry name" value="Nuclear speckle"/>
</dbReference>
<dbReference type="CD-CODE" id="91857CE7">
    <property type="entry name" value="Nucleolus"/>
</dbReference>
<dbReference type="CD-CODE" id="B5B9A610">
    <property type="entry name" value="PML body"/>
</dbReference>
<dbReference type="ChiTaRS" id="SMARCA4">
    <property type="organism name" value="human"/>
</dbReference>
<dbReference type="EvolutionaryTrace" id="P51532"/>
<dbReference type="GeneWiki" id="SMARCA4"/>
<dbReference type="GenomeRNAi" id="6597"/>
<dbReference type="Pharos" id="P51532">
    <property type="development level" value="Tchem"/>
</dbReference>
<dbReference type="PRO" id="PR:P51532"/>
<dbReference type="Proteomes" id="UP000005640">
    <property type="component" value="Chromosome 19"/>
</dbReference>
<dbReference type="RNAct" id="P51532">
    <property type="molecule type" value="protein"/>
</dbReference>
<dbReference type="Bgee" id="ENSG00000127616">
    <property type="expression patterns" value="Expressed in ganglionic eminence and 200 other cell types or tissues"/>
</dbReference>
<dbReference type="ExpressionAtlas" id="P51532">
    <property type="expression patterns" value="baseline and differential"/>
</dbReference>
<dbReference type="GO" id="GO:0140092">
    <property type="term" value="C:bBAF complex"/>
    <property type="evidence" value="ECO:0000303"/>
    <property type="project" value="ComplexPortal"/>
</dbReference>
<dbReference type="GO" id="GO:0000785">
    <property type="term" value="C:chromatin"/>
    <property type="evidence" value="ECO:0000314"/>
    <property type="project" value="BHF-UCL"/>
</dbReference>
<dbReference type="GO" id="GO:0005615">
    <property type="term" value="C:extracellular space"/>
    <property type="evidence" value="ECO:0007005"/>
    <property type="project" value="UniProtKB"/>
</dbReference>
<dbReference type="GO" id="GO:0001650">
    <property type="term" value="C:fibrillar center"/>
    <property type="evidence" value="ECO:0000314"/>
    <property type="project" value="HPA"/>
</dbReference>
<dbReference type="GO" id="GO:0140288">
    <property type="term" value="C:GBAF complex"/>
    <property type="evidence" value="ECO:0000303"/>
    <property type="project" value="ComplexPortal"/>
</dbReference>
<dbReference type="GO" id="GO:0000776">
    <property type="term" value="C:kinetochore"/>
    <property type="evidence" value="ECO:0000303"/>
    <property type="project" value="ComplexPortal"/>
</dbReference>
<dbReference type="GO" id="GO:0016020">
    <property type="term" value="C:membrane"/>
    <property type="evidence" value="ECO:0007005"/>
    <property type="project" value="UniProtKB"/>
</dbReference>
<dbReference type="GO" id="GO:0071565">
    <property type="term" value="C:nBAF complex"/>
    <property type="evidence" value="ECO:0000250"/>
    <property type="project" value="UniProtKB"/>
</dbReference>
<dbReference type="GO" id="GO:0071564">
    <property type="term" value="C:npBAF complex"/>
    <property type="evidence" value="ECO:0000314"/>
    <property type="project" value="BHF-UCL"/>
</dbReference>
<dbReference type="GO" id="GO:0016363">
    <property type="term" value="C:nuclear matrix"/>
    <property type="evidence" value="ECO:0000303"/>
    <property type="project" value="ComplexPortal"/>
</dbReference>
<dbReference type="GO" id="GO:0005730">
    <property type="term" value="C:nucleolus"/>
    <property type="evidence" value="ECO:0000314"/>
    <property type="project" value="HPA"/>
</dbReference>
<dbReference type="GO" id="GO:0005654">
    <property type="term" value="C:nucleoplasm"/>
    <property type="evidence" value="ECO:0000314"/>
    <property type="project" value="HPA"/>
</dbReference>
<dbReference type="GO" id="GO:0005634">
    <property type="term" value="C:nucleus"/>
    <property type="evidence" value="ECO:0000314"/>
    <property type="project" value="UniProtKB"/>
</dbReference>
<dbReference type="GO" id="GO:0032991">
    <property type="term" value="C:protein-containing complex"/>
    <property type="evidence" value="ECO:0007005"/>
    <property type="project" value="UniProtKB"/>
</dbReference>
<dbReference type="GO" id="GO:0016586">
    <property type="term" value="C:RSC-type complex"/>
    <property type="evidence" value="ECO:0000303"/>
    <property type="project" value="ComplexPortal"/>
</dbReference>
<dbReference type="GO" id="GO:0016514">
    <property type="term" value="C:SWI/SNF complex"/>
    <property type="evidence" value="ECO:0000314"/>
    <property type="project" value="UniProtKB"/>
</dbReference>
<dbReference type="GO" id="GO:0005524">
    <property type="term" value="F:ATP binding"/>
    <property type="evidence" value="ECO:0007669"/>
    <property type="project" value="UniProtKB-KW"/>
</dbReference>
<dbReference type="GO" id="GO:0008094">
    <property type="term" value="F:ATP-dependent activity, acting on DNA"/>
    <property type="evidence" value="ECO:0000316"/>
    <property type="project" value="BHF-UCL"/>
</dbReference>
<dbReference type="GO" id="GO:0140658">
    <property type="term" value="F:ATP-dependent chromatin remodeler activity"/>
    <property type="evidence" value="ECO:0000250"/>
    <property type="project" value="UniProt"/>
</dbReference>
<dbReference type="GO" id="GO:0003682">
    <property type="term" value="F:chromatin binding"/>
    <property type="evidence" value="ECO:0000318"/>
    <property type="project" value="GO_Central"/>
</dbReference>
<dbReference type="GO" id="GO:0003677">
    <property type="term" value="F:DNA binding"/>
    <property type="evidence" value="ECO:0000318"/>
    <property type="project" value="GO_Central"/>
</dbReference>
<dbReference type="GO" id="GO:0070182">
    <property type="term" value="F:DNA polymerase binding"/>
    <property type="evidence" value="ECO:0000353"/>
    <property type="project" value="BHF-UCL"/>
</dbReference>
<dbReference type="GO" id="GO:0004386">
    <property type="term" value="F:helicase activity"/>
    <property type="evidence" value="ECO:0000304"/>
    <property type="project" value="ProtInc"/>
</dbReference>
<dbReference type="GO" id="GO:0042393">
    <property type="term" value="F:histone binding"/>
    <property type="evidence" value="ECO:0007669"/>
    <property type="project" value="InterPro"/>
</dbReference>
<dbReference type="GO" id="GO:0016787">
    <property type="term" value="F:hydrolase activity"/>
    <property type="evidence" value="ECO:0007669"/>
    <property type="project" value="UniProtKB-KW"/>
</dbReference>
<dbReference type="GO" id="GO:0050681">
    <property type="term" value="F:nuclear androgen receptor binding"/>
    <property type="evidence" value="ECO:0000353"/>
    <property type="project" value="BHF-UCL"/>
</dbReference>
<dbReference type="GO" id="GO:0140750">
    <property type="term" value="F:nucleosome array spacer activity"/>
    <property type="evidence" value="ECO:0000318"/>
    <property type="project" value="GO_Central"/>
</dbReference>
<dbReference type="GO" id="GO:0002039">
    <property type="term" value="F:p53 binding"/>
    <property type="evidence" value="ECO:0000353"/>
    <property type="project" value="BHF-UCL"/>
</dbReference>
<dbReference type="GO" id="GO:0003723">
    <property type="term" value="F:RNA binding"/>
    <property type="evidence" value="ECO:0007669"/>
    <property type="project" value="UniProtKB-KW"/>
</dbReference>
<dbReference type="GO" id="GO:0030957">
    <property type="term" value="F:Tat protein binding"/>
    <property type="evidence" value="ECO:0000353"/>
    <property type="project" value="BHF-UCL"/>
</dbReference>
<dbReference type="GO" id="GO:0003713">
    <property type="term" value="F:transcription coactivator activity"/>
    <property type="evidence" value="ECO:0000314"/>
    <property type="project" value="BHF-UCL"/>
</dbReference>
<dbReference type="GO" id="GO:0001221">
    <property type="term" value="F:transcription coregulator binding"/>
    <property type="evidence" value="ECO:0000353"/>
    <property type="project" value="UniProtKB"/>
</dbReference>
<dbReference type="GO" id="GO:0003714">
    <property type="term" value="F:transcription corepressor activity"/>
    <property type="evidence" value="ECO:0000314"/>
    <property type="project" value="UniProtKB"/>
</dbReference>
<dbReference type="GO" id="GO:0006338">
    <property type="term" value="P:chromatin remodeling"/>
    <property type="evidence" value="ECO:0000314"/>
    <property type="project" value="BHF-UCL"/>
</dbReference>
<dbReference type="GO" id="GO:0060766">
    <property type="term" value="P:negative regulation of androgen receptor signaling pathway"/>
    <property type="evidence" value="ECO:0000315"/>
    <property type="project" value="BHF-UCL"/>
</dbReference>
<dbReference type="GO" id="GO:0045596">
    <property type="term" value="P:negative regulation of cell differentiation"/>
    <property type="evidence" value="ECO:0000303"/>
    <property type="project" value="ComplexPortal"/>
</dbReference>
<dbReference type="GO" id="GO:0030308">
    <property type="term" value="P:negative regulation of cell growth"/>
    <property type="evidence" value="ECO:0000315"/>
    <property type="project" value="BHF-UCL"/>
</dbReference>
<dbReference type="GO" id="GO:0045892">
    <property type="term" value="P:negative regulation of DNA-templated transcription"/>
    <property type="evidence" value="ECO:0000314"/>
    <property type="project" value="BHF-UCL"/>
</dbReference>
<dbReference type="GO" id="GO:0000122">
    <property type="term" value="P:negative regulation of transcription by RNA polymerase II"/>
    <property type="evidence" value="ECO:0000304"/>
    <property type="project" value="BHF-UCL"/>
</dbReference>
<dbReference type="GO" id="GO:0007399">
    <property type="term" value="P:nervous system development"/>
    <property type="evidence" value="ECO:0007669"/>
    <property type="project" value="UniProtKB-KW"/>
</dbReference>
<dbReference type="GO" id="GO:0003407">
    <property type="term" value="P:neural retina development"/>
    <property type="evidence" value="ECO:0000270"/>
    <property type="project" value="BHF-UCL"/>
</dbReference>
<dbReference type="GO" id="GO:0006337">
    <property type="term" value="P:nucleosome disassembly"/>
    <property type="evidence" value="ECO:0000314"/>
    <property type="project" value="BHF-UCL"/>
</dbReference>
<dbReference type="GO" id="GO:0043923">
    <property type="term" value="P:positive regulation by host of viral transcription"/>
    <property type="evidence" value="ECO:0000315"/>
    <property type="project" value="BHF-UCL"/>
</dbReference>
<dbReference type="GO" id="GO:0045597">
    <property type="term" value="P:positive regulation of cell differentiation"/>
    <property type="evidence" value="ECO:0000303"/>
    <property type="project" value="ComplexPortal"/>
</dbReference>
<dbReference type="GO" id="GO:0008284">
    <property type="term" value="P:positive regulation of cell population proliferation"/>
    <property type="evidence" value="ECO:0000303"/>
    <property type="project" value="ComplexPortal"/>
</dbReference>
<dbReference type="GO" id="GO:0120162">
    <property type="term" value="P:positive regulation of cold-induced thermogenesis"/>
    <property type="evidence" value="ECO:0000250"/>
    <property type="project" value="UniProt"/>
</dbReference>
<dbReference type="GO" id="GO:0045893">
    <property type="term" value="P:positive regulation of DNA-templated transcription"/>
    <property type="evidence" value="ECO:0000315"/>
    <property type="project" value="BHF-UCL"/>
</dbReference>
<dbReference type="GO" id="GO:2000781">
    <property type="term" value="P:positive regulation of double-strand break repair"/>
    <property type="evidence" value="ECO:0000303"/>
    <property type="project" value="ComplexPortal"/>
</dbReference>
<dbReference type="GO" id="GO:1902661">
    <property type="term" value="P:positive regulation of glucose mediated signaling pathway"/>
    <property type="evidence" value="ECO:0000314"/>
    <property type="project" value="UniProtKB"/>
</dbReference>
<dbReference type="GO" id="GO:1902895">
    <property type="term" value="P:positive regulation of miRNA transcription"/>
    <property type="evidence" value="ECO:0000315"/>
    <property type="project" value="BHF-UCL"/>
</dbReference>
<dbReference type="GO" id="GO:0045663">
    <property type="term" value="P:positive regulation of myoblast differentiation"/>
    <property type="evidence" value="ECO:0000303"/>
    <property type="project" value="ComplexPortal"/>
</dbReference>
<dbReference type="GO" id="GO:1901798">
    <property type="term" value="P:positive regulation of signal transduction by p53 class mediator"/>
    <property type="evidence" value="ECO:0000314"/>
    <property type="project" value="BHF-UCL"/>
</dbReference>
<dbReference type="GO" id="GO:1902459">
    <property type="term" value="P:positive regulation of stem cell population maintenance"/>
    <property type="evidence" value="ECO:0000303"/>
    <property type="project" value="ComplexPortal"/>
</dbReference>
<dbReference type="GO" id="GO:0045582">
    <property type="term" value="P:positive regulation of T cell differentiation"/>
    <property type="evidence" value="ECO:0000303"/>
    <property type="project" value="ComplexPortal"/>
</dbReference>
<dbReference type="GO" id="GO:0045944">
    <property type="term" value="P:positive regulation of transcription by RNA polymerase II"/>
    <property type="evidence" value="ECO:0000314"/>
    <property type="project" value="BHF-UCL"/>
</dbReference>
<dbReference type="GO" id="GO:1901838">
    <property type="term" value="P:positive regulation of transcription of nucleolar large rRNA by RNA polymerase I"/>
    <property type="evidence" value="ECO:0000315"/>
    <property type="project" value="UniProtKB"/>
</dbReference>
<dbReference type="GO" id="GO:0030177">
    <property type="term" value="P:positive regulation of Wnt signaling pathway"/>
    <property type="evidence" value="ECO:0000315"/>
    <property type="project" value="BHF-UCL"/>
</dbReference>
<dbReference type="GO" id="GO:0070316">
    <property type="term" value="P:regulation of G0 to G1 transition"/>
    <property type="evidence" value="ECO:0000303"/>
    <property type="project" value="ComplexPortal"/>
</dbReference>
<dbReference type="GO" id="GO:2000045">
    <property type="term" value="P:regulation of G1/S transition of mitotic cell cycle"/>
    <property type="evidence" value="ECO:0000303"/>
    <property type="project" value="ComplexPortal"/>
</dbReference>
<dbReference type="GO" id="GO:0030071">
    <property type="term" value="P:regulation of mitotic metaphase/anaphase transition"/>
    <property type="evidence" value="ECO:0000303"/>
    <property type="project" value="ComplexPortal"/>
</dbReference>
<dbReference type="GO" id="GO:2000819">
    <property type="term" value="P:regulation of nucleotide-excision repair"/>
    <property type="evidence" value="ECO:0000303"/>
    <property type="project" value="ComplexPortal"/>
</dbReference>
<dbReference type="GO" id="GO:0006357">
    <property type="term" value="P:regulation of transcription by RNA polymerase II"/>
    <property type="evidence" value="ECO:0000303"/>
    <property type="project" value="BHF-UCL"/>
</dbReference>
<dbReference type="GO" id="GO:0001188">
    <property type="term" value="P:RNA polymerase I preinitiation complex assembly"/>
    <property type="evidence" value="ECO:0007669"/>
    <property type="project" value="GOC"/>
</dbReference>
<dbReference type="GO" id="GO:0045815">
    <property type="term" value="P:transcription initiation-coupled chromatin remodeling"/>
    <property type="evidence" value="ECO:0000250"/>
    <property type="project" value="UniProt"/>
</dbReference>
<dbReference type="CDD" id="cd05516">
    <property type="entry name" value="Bromo_SNF2L2"/>
    <property type="match status" value="1"/>
</dbReference>
<dbReference type="CDD" id="cd18062">
    <property type="entry name" value="DEXHc_SMARCA4"/>
    <property type="match status" value="1"/>
</dbReference>
<dbReference type="CDD" id="cd18793">
    <property type="entry name" value="SF2_C_SNF"/>
    <property type="match status" value="1"/>
</dbReference>
<dbReference type="FunFam" id="3.40.50.10810:FF:000008">
    <property type="entry name" value="Chromatin structure-remodeling complex subunit snf21"/>
    <property type="match status" value="1"/>
</dbReference>
<dbReference type="FunFam" id="1.20.920.10:FF:000004">
    <property type="entry name" value="probable global transcription activator SNF2L2 isoform X1"/>
    <property type="match status" value="1"/>
</dbReference>
<dbReference type="FunFam" id="3.40.5.120:FF:000001">
    <property type="entry name" value="probable global transcription activator SNF2L2 isoform X1"/>
    <property type="match status" value="1"/>
</dbReference>
<dbReference type="FunFam" id="3.40.50.300:FF:000116">
    <property type="entry name" value="probable global transcription activator SNF2L2 isoform X1"/>
    <property type="match status" value="1"/>
</dbReference>
<dbReference type="FunFam" id="1.20.5.170:FF:000089">
    <property type="entry name" value="Putative global transcription activator SNF2L2"/>
    <property type="match status" value="1"/>
</dbReference>
<dbReference type="Gene3D" id="1.20.5.170">
    <property type="match status" value="1"/>
</dbReference>
<dbReference type="Gene3D" id="3.40.5.120">
    <property type="match status" value="1"/>
</dbReference>
<dbReference type="Gene3D" id="1.20.920.10">
    <property type="entry name" value="Bromodomain-like"/>
    <property type="match status" value="1"/>
</dbReference>
<dbReference type="Gene3D" id="3.40.50.300">
    <property type="entry name" value="P-loop containing nucleotide triphosphate hydrolases"/>
    <property type="match status" value="1"/>
</dbReference>
<dbReference type="Gene3D" id="3.40.50.10810">
    <property type="entry name" value="Tandem AAA-ATPase domain"/>
    <property type="match status" value="1"/>
</dbReference>
<dbReference type="InterPro" id="IPR030100">
    <property type="entry name" value="BRG1_ATP-bd"/>
</dbReference>
<dbReference type="InterPro" id="IPR006576">
    <property type="entry name" value="BRK_domain"/>
</dbReference>
<dbReference type="InterPro" id="IPR037259">
    <property type="entry name" value="BRK_sf"/>
</dbReference>
<dbReference type="InterPro" id="IPR001487">
    <property type="entry name" value="Bromodomain"/>
</dbReference>
<dbReference type="InterPro" id="IPR036427">
    <property type="entry name" value="Bromodomain-like_sf"/>
</dbReference>
<dbReference type="InterPro" id="IPR018359">
    <property type="entry name" value="Bromodomain_CS"/>
</dbReference>
<dbReference type="InterPro" id="IPR014978">
    <property type="entry name" value="Gln-Leu-Gln_QLQ"/>
</dbReference>
<dbReference type="InterPro" id="IPR014001">
    <property type="entry name" value="Helicase_ATP-bd"/>
</dbReference>
<dbReference type="InterPro" id="IPR001650">
    <property type="entry name" value="Helicase_C-like"/>
</dbReference>
<dbReference type="InterPro" id="IPR014012">
    <property type="entry name" value="HSA_dom"/>
</dbReference>
<dbReference type="InterPro" id="IPR027417">
    <property type="entry name" value="P-loop_NTPase"/>
</dbReference>
<dbReference type="InterPro" id="IPR029295">
    <property type="entry name" value="SnAC"/>
</dbReference>
<dbReference type="InterPro" id="IPR038718">
    <property type="entry name" value="SNF2-like_sf"/>
</dbReference>
<dbReference type="InterPro" id="IPR049730">
    <property type="entry name" value="SNF2/RAD54-like_C"/>
</dbReference>
<dbReference type="InterPro" id="IPR000330">
    <property type="entry name" value="SNF2_N"/>
</dbReference>
<dbReference type="PANTHER" id="PTHR10799">
    <property type="entry name" value="SNF2/RAD54 HELICASE FAMILY"/>
    <property type="match status" value="1"/>
</dbReference>
<dbReference type="Pfam" id="PF07533">
    <property type="entry name" value="BRK"/>
    <property type="match status" value="1"/>
</dbReference>
<dbReference type="Pfam" id="PF00439">
    <property type="entry name" value="Bromodomain"/>
    <property type="match status" value="1"/>
</dbReference>
<dbReference type="Pfam" id="PF00271">
    <property type="entry name" value="Helicase_C"/>
    <property type="match status" value="1"/>
</dbReference>
<dbReference type="Pfam" id="PF07529">
    <property type="entry name" value="HSA"/>
    <property type="match status" value="1"/>
</dbReference>
<dbReference type="Pfam" id="PF08880">
    <property type="entry name" value="QLQ"/>
    <property type="match status" value="1"/>
</dbReference>
<dbReference type="Pfam" id="PF14619">
    <property type="entry name" value="SnAC"/>
    <property type="match status" value="1"/>
</dbReference>
<dbReference type="Pfam" id="PF00176">
    <property type="entry name" value="SNF2-rel_dom"/>
    <property type="match status" value="1"/>
</dbReference>
<dbReference type="PRINTS" id="PR00503">
    <property type="entry name" value="BROMODOMAIN"/>
</dbReference>
<dbReference type="SMART" id="SM00592">
    <property type="entry name" value="BRK"/>
    <property type="match status" value="1"/>
</dbReference>
<dbReference type="SMART" id="SM00297">
    <property type="entry name" value="BROMO"/>
    <property type="match status" value="1"/>
</dbReference>
<dbReference type="SMART" id="SM00487">
    <property type="entry name" value="DEXDc"/>
    <property type="match status" value="1"/>
</dbReference>
<dbReference type="SMART" id="SM00490">
    <property type="entry name" value="HELICc"/>
    <property type="match status" value="1"/>
</dbReference>
<dbReference type="SMART" id="SM00573">
    <property type="entry name" value="HSA"/>
    <property type="match status" value="1"/>
</dbReference>
<dbReference type="SMART" id="SM00951">
    <property type="entry name" value="QLQ"/>
    <property type="match status" value="1"/>
</dbReference>
<dbReference type="SMART" id="SM01314">
    <property type="entry name" value="SnAC"/>
    <property type="match status" value="1"/>
</dbReference>
<dbReference type="SUPFAM" id="SSF160481">
    <property type="entry name" value="BRK domain-like"/>
    <property type="match status" value="1"/>
</dbReference>
<dbReference type="SUPFAM" id="SSF47370">
    <property type="entry name" value="Bromodomain"/>
    <property type="match status" value="1"/>
</dbReference>
<dbReference type="SUPFAM" id="SSF52540">
    <property type="entry name" value="P-loop containing nucleoside triphosphate hydrolases"/>
    <property type="match status" value="2"/>
</dbReference>
<dbReference type="PROSITE" id="PS00633">
    <property type="entry name" value="BROMODOMAIN_1"/>
    <property type="match status" value="1"/>
</dbReference>
<dbReference type="PROSITE" id="PS50014">
    <property type="entry name" value="BROMODOMAIN_2"/>
    <property type="match status" value="1"/>
</dbReference>
<dbReference type="PROSITE" id="PS51192">
    <property type="entry name" value="HELICASE_ATP_BIND_1"/>
    <property type="match status" value="1"/>
</dbReference>
<dbReference type="PROSITE" id="PS51194">
    <property type="entry name" value="HELICASE_CTER"/>
    <property type="match status" value="1"/>
</dbReference>
<dbReference type="PROSITE" id="PS51204">
    <property type="entry name" value="HSA"/>
    <property type="match status" value="1"/>
</dbReference>
<dbReference type="PROSITE" id="PS51666">
    <property type="entry name" value="QLQ"/>
    <property type="match status" value="1"/>
</dbReference>
<feature type="chain" id="PRO_0000074353" description="SWI/SNF-related matrix-associated actin-dependent regulator of chromatin subfamily A member 4">
    <location>
        <begin position="1"/>
        <end position="1647"/>
    </location>
</feature>
<feature type="domain" description="QLQ" evidence="9">
    <location>
        <begin position="171"/>
        <end position="206"/>
    </location>
</feature>
<feature type="domain" description="HSA" evidence="8">
    <location>
        <begin position="460"/>
        <end position="532"/>
    </location>
</feature>
<feature type="domain" description="Helicase ATP-binding" evidence="6">
    <location>
        <begin position="766"/>
        <end position="931"/>
    </location>
</feature>
<feature type="domain" description="Helicase C-terminal" evidence="7">
    <location>
        <begin position="1084"/>
        <end position="1246"/>
    </location>
</feature>
<feature type="domain" description="Bromo" evidence="5">
    <location>
        <begin position="1453"/>
        <end position="1564"/>
    </location>
</feature>
<feature type="region of interest" description="Necessary for interaction with SS18L1/CREST" evidence="1">
    <location>
        <begin position="1"/>
        <end position="282"/>
    </location>
</feature>
<feature type="region of interest" description="Disordered" evidence="10">
    <location>
        <begin position="1"/>
        <end position="177"/>
    </location>
</feature>
<feature type="region of interest" description="Disordered" evidence="10">
    <location>
        <begin position="198"/>
        <end position="352"/>
    </location>
</feature>
<feature type="region of interest" description="RNA-binding region which is sufficient for binding to lncRNA Evf2" evidence="2">
    <location>
        <begin position="462"/>
        <end position="728"/>
    </location>
</feature>
<feature type="region of interest" description="Disordered" evidence="10">
    <location>
        <begin position="577"/>
        <end position="610"/>
    </location>
</feature>
<feature type="region of interest" description="Disordered" evidence="10">
    <location>
        <begin position="647"/>
        <end position="699"/>
    </location>
</feature>
<feature type="region of interest" description="Sufficient for interaction with DLX1" evidence="2">
    <location>
        <begin position="837"/>
        <end position="916"/>
    </location>
</feature>
<feature type="region of interest" description="Sufficient for interaction with DLX1" evidence="2">
    <location>
        <begin position="1247"/>
        <end position="1446"/>
    </location>
</feature>
<feature type="region of interest" description="Disordered" evidence="10">
    <location>
        <begin position="1254"/>
        <end position="1299"/>
    </location>
</feature>
<feature type="region of interest" description="Disordered" evidence="10">
    <location>
        <begin position="1400"/>
        <end position="1460"/>
    </location>
</feature>
<feature type="region of interest" description="Disordered" evidence="10">
    <location>
        <begin position="1564"/>
        <end position="1647"/>
    </location>
</feature>
<feature type="short sequence motif" description="DEGH box">
    <location>
        <begin position="881"/>
        <end position="884"/>
    </location>
</feature>
<feature type="short sequence motif" description="KIKL" evidence="27">
    <location>
        <begin position="1596"/>
        <end position="1599"/>
    </location>
</feature>
<feature type="compositionally biased region" description="Pro residues" evidence="10">
    <location>
        <begin position="1"/>
        <end position="23"/>
    </location>
</feature>
<feature type="compositionally biased region" description="Low complexity" evidence="10">
    <location>
        <begin position="24"/>
        <end position="45"/>
    </location>
</feature>
<feature type="compositionally biased region" description="Basic and acidic residues" evidence="10">
    <location>
        <begin position="74"/>
        <end position="89"/>
    </location>
</feature>
<feature type="compositionally biased region" description="Low complexity" evidence="10">
    <location>
        <begin position="130"/>
        <end position="147"/>
    </location>
</feature>
<feature type="compositionally biased region" description="Polar residues" evidence="10">
    <location>
        <begin position="162"/>
        <end position="177"/>
    </location>
</feature>
<feature type="compositionally biased region" description="Pro residues" evidence="10">
    <location>
        <begin position="231"/>
        <end position="249"/>
    </location>
</feature>
<feature type="compositionally biased region" description="Pro residues" evidence="10">
    <location>
        <begin position="259"/>
        <end position="286"/>
    </location>
</feature>
<feature type="compositionally biased region" description="Pro residues" evidence="10">
    <location>
        <begin position="302"/>
        <end position="327"/>
    </location>
</feature>
<feature type="compositionally biased region" description="Basic residues" evidence="10">
    <location>
        <begin position="579"/>
        <end position="588"/>
    </location>
</feature>
<feature type="compositionally biased region" description="Acidic residues" evidence="10">
    <location>
        <begin position="658"/>
        <end position="673"/>
    </location>
</feature>
<feature type="compositionally biased region" description="Polar residues" evidence="10">
    <location>
        <begin position="1262"/>
        <end position="1271"/>
    </location>
</feature>
<feature type="compositionally biased region" description="Acidic residues" evidence="10">
    <location>
        <begin position="1284"/>
        <end position="1299"/>
    </location>
</feature>
<feature type="compositionally biased region" description="Basic and acidic residues" evidence="10">
    <location>
        <begin position="1429"/>
        <end position="1438"/>
    </location>
</feature>
<feature type="compositionally biased region" description="Acidic residues" evidence="10">
    <location>
        <begin position="1567"/>
        <end position="1587"/>
    </location>
</feature>
<feature type="compositionally biased region" description="Basic and acidic residues" evidence="10">
    <location>
        <begin position="1600"/>
        <end position="1610"/>
    </location>
</feature>
<feature type="compositionally biased region" description="Basic residues" evidence="10">
    <location>
        <begin position="1611"/>
        <end position="1621"/>
    </location>
</feature>
<feature type="compositionally biased region" description="Acidic residues" evidence="10">
    <location>
        <begin position="1627"/>
        <end position="1637"/>
    </location>
</feature>
<feature type="binding site" evidence="6">
    <location>
        <begin position="779"/>
        <end position="786"/>
    </location>
    <ligand>
        <name>ATP</name>
        <dbReference type="ChEBI" id="CHEBI:30616"/>
    </ligand>
</feature>
<feature type="site" description="Required for binding to 'Lys-15'-acetylated histone 3">
    <location>
        <begin position="1539"/>
        <end position="1540"/>
    </location>
</feature>
<feature type="modified residue" description="Phosphothreonine" evidence="41">
    <location>
        <position position="11"/>
    </location>
</feature>
<feature type="modified residue" description="N6-acetyllysine" evidence="43">
    <location>
        <position position="188"/>
    </location>
</feature>
<feature type="modified residue" description="Phosphothreonine" evidence="44">
    <location>
        <position position="353"/>
    </location>
</feature>
<feature type="modified residue" description="Phosphothreonine" evidence="44">
    <location>
        <position position="609"/>
    </location>
</feature>
<feature type="modified residue" description="Phosphoserine" evidence="44">
    <location>
        <position position="610"/>
    </location>
</feature>
<feature type="modified residue" description="Phosphoserine" evidence="42 44 46 48">
    <location>
        <position position="613"/>
    </location>
</feature>
<feature type="modified residue" description="N6-acetyllysine" evidence="3">
    <location>
        <position position="626"/>
    </location>
</feature>
<feature type="modified residue" description="Phosphoserine" evidence="44 45 46 47">
    <location>
        <position position="695"/>
    </location>
</feature>
<feature type="modified residue" description="Phosphoserine" evidence="45 46 47">
    <location>
        <position position="699"/>
    </location>
</feature>
<feature type="modified residue" description="Phosphoserine" evidence="42 46">
    <location>
        <position position="1382"/>
    </location>
</feature>
<feature type="modified residue" description="Phosphothreonine" evidence="2">
    <location>
        <position position="1423"/>
    </location>
</feature>
<feature type="modified residue" description="Phosphoserine" evidence="41 42 47">
    <location>
        <position position="1452"/>
    </location>
</feature>
<feature type="modified residue" description="Phosphoserine" evidence="42 44 45">
    <location>
        <position position="1570"/>
    </location>
</feature>
<feature type="modified residue" description="Phosphoserine" evidence="42 44 45">
    <location>
        <position position="1575"/>
    </location>
</feature>
<feature type="modified residue" description="Phosphoserine" evidence="42">
    <location>
        <position position="1586"/>
    </location>
</feature>
<feature type="modified residue" description="Phosphoserine" evidence="44 46">
    <location>
        <position position="1627"/>
    </location>
</feature>
<feature type="modified residue" description="Phosphoserine" evidence="46 48">
    <location>
        <position position="1631"/>
    </location>
</feature>
<feature type="cross-link" description="Glycyl lysine isopeptide (Lys-Gly) (interchain with G-Cter in SUMO2)" evidence="49">
    <location>
        <position position="1365"/>
    </location>
</feature>
<feature type="splice variant" id="VSP_043137" description="In isoform 2, isoform 3, isoform 4 and isoform 5." evidence="33">
    <location>
        <begin position="1259"/>
        <end position="1291"/>
    </location>
</feature>
<feature type="splice variant" id="VSP_043677" description="In isoform 3 and isoform 4." evidence="33">
    <original>W</original>
    <variation>WLKT</variation>
    <location>
        <position position="1388"/>
    </location>
</feature>
<feature type="splice variant" id="VSP_043678" description="In isoform 3 and isoform 5." evidence="33">
    <location>
        <position position="1475"/>
    </location>
</feature>
<feature type="sequence variant" id="VAR_068209" description="In CSS4." evidence="23">
    <location>
        <position position="546"/>
    </location>
</feature>
<feature type="sequence variant" id="VAR_028215" description="In dbSNP:rs1804579.">
    <original>V</original>
    <variation>E</variation>
    <location>
        <position position="561"/>
    </location>
</feature>
<feature type="sequence variant" id="VAR_068210" description="In CSS4; dbSNP:rs281875226." evidence="23">
    <original>T</original>
    <variation>M</variation>
    <location>
        <position position="859"/>
    </location>
</feature>
<feature type="sequence variant" id="VAR_068211" description="In CSS4; dbSNP:rs281875227." evidence="23">
    <original>R</original>
    <variation>C</variation>
    <location>
        <position position="885"/>
    </location>
</feature>
<feature type="sequence variant" id="VAR_068212" description="In CSS4; dbSNP:rs281875228." evidence="23">
    <original>L</original>
    <variation>F</variation>
    <location>
        <position position="921"/>
    </location>
</feature>
<feature type="sequence variant" id="VAR_068213" description="In CSS4; dbSNP:rs281875229." evidence="23">
    <original>M</original>
    <variation>T</variation>
    <location>
        <position position="1011"/>
    </location>
</feature>
<feature type="sequence variant" id="VAR_028216" description="In dbSNP:rs1801514.">
    <original>M</original>
    <variation>I</variation>
    <location>
        <position position="1036"/>
    </location>
</feature>
<feature type="sequence variant" id="VAR_068214" description="In CSS4; dbSNP:rs281875230." evidence="23">
    <original>R</original>
    <variation>G</variation>
    <location>
        <position position="1157"/>
    </location>
</feature>
<feature type="sequence variant" id="VAR_089541" description="In OTSC12; likely pathogenic; CRISP-Cas9 transgenic mice carrying this variant exhibit marked hearing impairment, with a highly irregular structure of the incus bone in the auditory bullae, causing disruption in the ossicular chain." evidence="30">
    <original>E</original>
    <variation>K</variation>
    <location>
        <position position="1578"/>
    </location>
</feature>
<feature type="mutagenesis site" description="No effect on binding to 'Lys-15'-acetylated histone H3." evidence="16">
    <original>V</original>
    <variation>A</variation>
    <location>
        <position position="1484"/>
    </location>
</feature>
<feature type="mutagenesis site" description="Abolishes binding to 'Lys-15'-acetylated histone H3." evidence="16">
    <original>F</original>
    <variation>A</variation>
    <location>
        <position position="1539"/>
    </location>
</feature>
<feature type="mutagenesis site" description="Abolishes binding to 'Lys-15'-acetylated histone H3." evidence="16">
    <original>N</original>
    <variation>A</variation>
    <location>
        <position position="1540"/>
    </location>
</feature>
<feature type="sequence conflict" description="In Ref. 1; AAB40977 and 3; BAA05143." evidence="37" ref="1 3">
    <original>R</original>
    <variation>P</variation>
    <location>
        <position position="569"/>
    </location>
</feature>
<feature type="helix" evidence="57">
    <location>
        <begin position="174"/>
        <end position="191"/>
    </location>
</feature>
<feature type="helix" evidence="57">
    <location>
        <begin position="198"/>
        <end position="203"/>
    </location>
</feature>
<feature type="helix" evidence="52">
    <location>
        <begin position="363"/>
        <end position="386"/>
    </location>
</feature>
<feature type="turn" evidence="56">
    <location>
        <begin position="392"/>
        <end position="394"/>
    </location>
</feature>
<feature type="helix" evidence="52">
    <location>
        <begin position="397"/>
        <end position="408"/>
    </location>
</feature>
<feature type="helix" evidence="52">
    <location>
        <begin position="410"/>
        <end position="427"/>
    </location>
</feature>
<feature type="helix" evidence="52">
    <location>
        <begin position="431"/>
        <end position="433"/>
    </location>
</feature>
<feature type="strand" evidence="52">
    <location>
        <begin position="434"/>
        <end position="437"/>
    </location>
</feature>
<feature type="helix" evidence="52">
    <location>
        <begin position="447"/>
        <end position="474"/>
    </location>
</feature>
<feature type="helix" evidence="55">
    <location>
        <begin position="543"/>
        <end position="557"/>
    </location>
</feature>
<feature type="turn" evidence="53">
    <location>
        <begin position="612"/>
        <end position="614"/>
    </location>
</feature>
<feature type="strand" evidence="53">
    <location>
        <begin position="619"/>
        <end position="621"/>
    </location>
</feature>
<feature type="turn" evidence="53">
    <location>
        <begin position="622"/>
        <end position="624"/>
    </location>
</feature>
<feature type="turn" evidence="53">
    <location>
        <begin position="630"/>
        <end position="632"/>
    </location>
</feature>
<feature type="turn" evidence="53">
    <location>
        <begin position="636"/>
        <end position="638"/>
    </location>
</feature>
<feature type="helix" evidence="53">
    <location>
        <begin position="639"/>
        <end position="645"/>
    </location>
</feature>
<feature type="strand" evidence="53">
    <location>
        <begin position="649"/>
        <end position="651"/>
    </location>
</feature>
<feature type="helix" evidence="55">
    <location>
        <begin position="732"/>
        <end position="735"/>
    </location>
</feature>
<feature type="helix" evidence="55">
    <location>
        <begin position="756"/>
        <end position="770"/>
    </location>
</feature>
<feature type="helix" evidence="55">
    <location>
        <begin position="785"/>
        <end position="798"/>
    </location>
</feature>
<feature type="strand" evidence="55">
    <location>
        <begin position="807"/>
        <end position="810"/>
    </location>
</feature>
<feature type="helix" evidence="55">
    <location>
        <begin position="812"/>
        <end position="814"/>
    </location>
</feature>
<feature type="helix" evidence="55">
    <location>
        <begin position="815"/>
        <end position="825"/>
    </location>
</feature>
<feature type="strand" evidence="55">
    <location>
        <begin position="831"/>
        <end position="833"/>
    </location>
</feature>
<feature type="helix" evidence="55">
    <location>
        <begin position="838"/>
        <end position="843"/>
    </location>
</feature>
<feature type="helix" evidence="55">
    <location>
        <begin position="845"/>
        <end position="850"/>
    </location>
</feature>
<feature type="strand" evidence="55">
    <location>
        <begin position="854"/>
        <end position="859"/>
    </location>
</feature>
<feature type="helix" evidence="55">
    <location>
        <begin position="860"/>
        <end position="865"/>
    </location>
</feature>
<feature type="helix" evidence="55">
    <location>
        <begin position="867"/>
        <end position="870"/>
    </location>
</feature>
<feature type="strand" evidence="55">
    <location>
        <begin position="878"/>
        <end position="882"/>
    </location>
</feature>
<feature type="helix" evidence="55">
    <location>
        <begin position="883"/>
        <end position="887"/>
    </location>
</feature>
<feature type="helix" evidence="55">
    <location>
        <begin position="892"/>
        <end position="900"/>
    </location>
</feature>
<feature type="strand" evidence="55">
    <location>
        <begin position="904"/>
        <end position="909"/>
    </location>
</feature>
<feature type="strand" evidence="56">
    <location>
        <begin position="911"/>
        <end position="913"/>
    </location>
</feature>
<feature type="helix" evidence="55">
    <location>
        <begin position="919"/>
        <end position="928"/>
    </location>
</feature>
<feature type="turn" evidence="55">
    <location>
        <begin position="930"/>
        <end position="933"/>
    </location>
</feature>
<feature type="strand" evidence="56">
    <location>
        <begin position="942"/>
        <end position="945"/>
    </location>
</feature>
<feature type="strand" evidence="55">
    <location>
        <begin position="956"/>
        <end position="960"/>
    </location>
</feature>
<feature type="helix" evidence="55">
    <location>
        <begin position="963"/>
        <end position="971"/>
    </location>
</feature>
<feature type="helix" evidence="56">
    <location>
        <begin position="973"/>
        <end position="975"/>
    </location>
</feature>
<feature type="helix" evidence="55">
    <location>
        <begin position="981"/>
        <end position="984"/>
    </location>
</feature>
<feature type="strand" evidence="55">
    <location>
        <begin position="992"/>
        <end position="996"/>
    </location>
</feature>
<feature type="helix" evidence="55">
    <location>
        <begin position="1002"/>
        <end position="1013"/>
    </location>
</feature>
<feature type="strand" evidence="56">
    <location>
        <begin position="1016"/>
        <end position="1018"/>
    </location>
</feature>
<feature type="strand" evidence="56">
    <location>
        <begin position="1032"/>
        <end position="1034"/>
    </location>
</feature>
<feature type="helix" evidence="55">
    <location>
        <begin position="1038"/>
        <end position="1047"/>
    </location>
</feature>
<feature type="helix" evidence="55">
    <location>
        <begin position="1049"/>
        <end position="1052"/>
    </location>
</feature>
<feature type="helix" evidence="55">
    <location>
        <begin position="1055"/>
        <end position="1062"/>
    </location>
</feature>
<feature type="strand" evidence="55">
    <location>
        <begin position="1067"/>
        <end position="1069"/>
    </location>
</feature>
<feature type="helix" evidence="55">
    <location>
        <begin position="1073"/>
        <end position="1078"/>
    </location>
</feature>
<feature type="helix" evidence="55">
    <location>
        <begin position="1080"/>
        <end position="1094"/>
    </location>
</feature>
<feature type="strand" evidence="55">
    <location>
        <begin position="1099"/>
        <end position="1104"/>
    </location>
</feature>
<feature type="helix" evidence="55">
    <location>
        <begin position="1106"/>
        <end position="1118"/>
    </location>
</feature>
<feature type="strand" evidence="55">
    <location>
        <begin position="1123"/>
        <end position="1126"/>
    </location>
</feature>
<feature type="strand" evidence="56">
    <location>
        <begin position="1128"/>
        <end position="1130"/>
    </location>
</feature>
<feature type="helix" evidence="55">
    <location>
        <begin position="1132"/>
        <end position="1143"/>
    </location>
</feature>
<feature type="strand" evidence="55">
    <location>
        <begin position="1151"/>
        <end position="1155"/>
    </location>
</feature>
<feature type="helix" evidence="55">
    <location>
        <begin position="1156"/>
        <end position="1159"/>
    </location>
</feature>
<feature type="strand" evidence="55">
    <location>
        <begin position="1160"/>
        <end position="1162"/>
    </location>
</feature>
<feature type="strand" evidence="55">
    <location>
        <begin position="1170"/>
        <end position="1175"/>
    </location>
</feature>
<feature type="helix" evidence="55">
    <location>
        <begin position="1180"/>
        <end position="1187"/>
    </location>
</feature>
<feature type="turn" evidence="55">
    <location>
        <begin position="1188"/>
        <end position="1190"/>
    </location>
</feature>
<feature type="strand" evidence="55">
    <location>
        <begin position="1200"/>
        <end position="1204"/>
    </location>
</feature>
<feature type="helix" evidence="55">
    <location>
        <begin position="1210"/>
        <end position="1228"/>
    </location>
</feature>
<feature type="turn" evidence="55">
    <location>
        <begin position="1229"/>
        <end position="1232"/>
    </location>
</feature>
<feature type="strand" evidence="55">
    <location>
        <begin position="1235"/>
        <end position="1237"/>
    </location>
</feature>
<feature type="helix" evidence="55">
    <location>
        <begin position="1242"/>
        <end position="1252"/>
    </location>
</feature>
<feature type="turn" evidence="55">
    <location>
        <begin position="1253"/>
        <end position="1256"/>
    </location>
</feature>
<feature type="helix" evidence="55">
    <location>
        <begin position="1301"/>
        <end position="1306"/>
    </location>
</feature>
<feature type="helix" evidence="55">
    <location>
        <begin position="1310"/>
        <end position="1327"/>
    </location>
</feature>
<feature type="turn" evidence="55">
    <location>
        <begin position="1337"/>
        <end position="1343"/>
    </location>
</feature>
<feature type="helix" evidence="55">
    <location>
        <begin position="1344"/>
        <end position="1348"/>
    </location>
</feature>
<feature type="strand" evidence="55">
    <location>
        <begin position="1368"/>
        <end position="1370"/>
    </location>
</feature>
<feature type="helix" evidence="54">
    <location>
        <begin position="1456"/>
        <end position="1471"/>
    </location>
</feature>
<feature type="turn" evidence="54">
    <location>
        <begin position="1475"/>
        <end position="1477"/>
    </location>
</feature>
<feature type="helix" evidence="54">
    <location>
        <begin position="1481"/>
        <end position="1485"/>
    </location>
</feature>
<feature type="turn" evidence="54">
    <location>
        <begin position="1491"/>
        <end position="1493"/>
    </location>
</feature>
<feature type="helix" evidence="54">
    <location>
        <begin position="1495"/>
        <end position="1500"/>
    </location>
</feature>
<feature type="helix" evidence="54">
    <location>
        <begin position="1507"/>
        <end position="1515"/>
    </location>
</feature>
<feature type="helix" evidence="54">
    <location>
        <begin position="1522"/>
        <end position="1539"/>
    </location>
</feature>
<feature type="strand" evidence="50">
    <location>
        <begin position="1542"/>
        <end position="1544"/>
    </location>
</feature>
<feature type="helix" evidence="54">
    <location>
        <begin position="1545"/>
        <end position="1568"/>
    </location>
</feature>
<feature type="helix" evidence="51">
    <location>
        <begin position="1571"/>
        <end position="1577"/>
    </location>
</feature>
<proteinExistence type="evidence at protein level"/>
<reference key="1">
    <citation type="journal article" date="1993" name="Nature">
        <title>BRG1 contains a conserved domain of the SWI2/SNF2 family necessary for normal mitotic growth and transcription.</title>
        <authorList>
            <person name="Khavari P.A."/>
            <person name="Peterson C.L."/>
            <person name="Tamkun J.W."/>
            <person name="Mendel D.B."/>
            <person name="Crabtree G.R."/>
        </authorList>
    </citation>
    <scope>NUCLEOTIDE SEQUENCE [MRNA] (ISOFORM 1)</scope>
</reference>
<reference key="2">
    <citation type="submission" date="1995-06" db="EMBL/GenBank/DDBJ databases">
        <authorList>
            <person name="Khavari P.A."/>
            <person name="Peterson C.L."/>
            <person name="Tamkun J.W."/>
            <person name="Mendel D.B."/>
            <person name="Crabtree G.R."/>
        </authorList>
    </citation>
    <scope>SEQUENCE REVISION</scope>
</reference>
<reference key="3">
    <citation type="journal article" date="1994" name="Nucleic Acids Res.">
        <title>Two human homologues of Saccharomyces cerevisiae SWI2/SNF2 and Drosophila brahma are transcriptional coactivators cooperating with the estrogen receptor and the retinoic acid receptor.</title>
        <authorList>
            <person name="Chiba H."/>
            <person name="Muramatsu M."/>
            <person name="Nomoto A."/>
            <person name="Kato H."/>
        </authorList>
    </citation>
    <scope>NUCLEOTIDE SEQUENCE [MRNA] (ISOFORM 1)</scope>
    <source>
        <tissue>Fetal brain</tissue>
    </source>
</reference>
<reference key="4">
    <citation type="journal article" date="2000" name="Cancer Res.">
        <title>BRG1, a component of the SWI-SNF complex, is mutated in multiple human tumor cell lines.</title>
        <authorList>
            <person name="Wong A.K.C."/>
            <person name="Shanahan F."/>
            <person name="Chen Y."/>
            <person name="Lian L."/>
            <person name="Ha P."/>
            <person name="Hendricks K."/>
            <person name="Ghaffari S."/>
            <person name="Iliev D."/>
            <person name="Penn B."/>
            <person name="Woodland A.-M."/>
            <person name="Smith R."/>
            <person name="Salada G."/>
            <person name="Carillo A."/>
            <person name="Laity K."/>
            <person name="Gupte J."/>
            <person name="Swedlund B."/>
            <person name="Tavtigian S.V."/>
            <person name="Teng D.H.-F."/>
            <person name="Lees E."/>
        </authorList>
    </citation>
    <scope>NUCLEOTIDE SEQUENCE [GENOMIC DNA]</scope>
</reference>
<reference key="5">
    <citation type="journal article" date="2008" name="Hum. Mutat.">
        <title>Frequent BRG1/SMARCA4-inactivating mutations in human lung cancer cell lines.</title>
        <authorList>
            <person name="Medina P.P."/>
            <person name="Romero O.A."/>
            <person name="Kohno T."/>
            <person name="Montuenga L.M."/>
            <person name="Pio R."/>
            <person name="Yokota J."/>
            <person name="Sanchez-Cespedes M."/>
        </authorList>
    </citation>
    <scope>NUCLEOTIDE SEQUENCE [MRNA] (ISOFORMS 2; 3; 4 AND 5)</scope>
    <source>
        <tissue>Lung</tissue>
    </source>
</reference>
<reference key="6">
    <citation type="journal article" date="2004" name="Nature">
        <title>The DNA sequence and biology of human chromosome 19.</title>
        <authorList>
            <person name="Grimwood J."/>
            <person name="Gordon L.A."/>
            <person name="Olsen A.S."/>
            <person name="Terry A."/>
            <person name="Schmutz J."/>
            <person name="Lamerdin J.E."/>
            <person name="Hellsten U."/>
            <person name="Goodstein D."/>
            <person name="Couronne O."/>
            <person name="Tran-Gyamfi M."/>
            <person name="Aerts A."/>
            <person name="Altherr M."/>
            <person name="Ashworth L."/>
            <person name="Bajorek E."/>
            <person name="Black S."/>
            <person name="Branscomb E."/>
            <person name="Caenepeel S."/>
            <person name="Carrano A.V."/>
            <person name="Caoile C."/>
            <person name="Chan Y.M."/>
            <person name="Christensen M."/>
            <person name="Cleland C.A."/>
            <person name="Copeland A."/>
            <person name="Dalin E."/>
            <person name="Dehal P."/>
            <person name="Denys M."/>
            <person name="Detter J.C."/>
            <person name="Escobar J."/>
            <person name="Flowers D."/>
            <person name="Fotopulos D."/>
            <person name="Garcia C."/>
            <person name="Georgescu A.M."/>
            <person name="Glavina T."/>
            <person name="Gomez M."/>
            <person name="Gonzales E."/>
            <person name="Groza M."/>
            <person name="Hammon N."/>
            <person name="Hawkins T."/>
            <person name="Haydu L."/>
            <person name="Ho I."/>
            <person name="Huang W."/>
            <person name="Israni S."/>
            <person name="Jett J."/>
            <person name="Kadner K."/>
            <person name="Kimball H."/>
            <person name="Kobayashi A."/>
            <person name="Larionov V."/>
            <person name="Leem S.-H."/>
            <person name="Lopez F."/>
            <person name="Lou Y."/>
            <person name="Lowry S."/>
            <person name="Malfatti S."/>
            <person name="Martinez D."/>
            <person name="McCready P.M."/>
            <person name="Medina C."/>
            <person name="Morgan J."/>
            <person name="Nelson K."/>
            <person name="Nolan M."/>
            <person name="Ovcharenko I."/>
            <person name="Pitluck S."/>
            <person name="Pollard M."/>
            <person name="Popkie A.P."/>
            <person name="Predki P."/>
            <person name="Quan G."/>
            <person name="Ramirez L."/>
            <person name="Rash S."/>
            <person name="Retterer J."/>
            <person name="Rodriguez A."/>
            <person name="Rogers S."/>
            <person name="Salamov A."/>
            <person name="Salazar A."/>
            <person name="She X."/>
            <person name="Smith D."/>
            <person name="Slezak T."/>
            <person name="Solovyev V."/>
            <person name="Thayer N."/>
            <person name="Tice H."/>
            <person name="Tsai M."/>
            <person name="Ustaszewska A."/>
            <person name="Vo N."/>
            <person name="Wagner M."/>
            <person name="Wheeler J."/>
            <person name="Wu K."/>
            <person name="Xie G."/>
            <person name="Yang J."/>
            <person name="Dubchak I."/>
            <person name="Furey T.S."/>
            <person name="DeJong P."/>
            <person name="Dickson M."/>
            <person name="Gordon D."/>
            <person name="Eichler E.E."/>
            <person name="Pennacchio L.A."/>
            <person name="Richardson P."/>
            <person name="Stubbs L."/>
            <person name="Rokhsar D.S."/>
            <person name="Myers R.M."/>
            <person name="Rubin E.M."/>
            <person name="Lucas S.M."/>
        </authorList>
    </citation>
    <scope>NUCLEOTIDE SEQUENCE [LARGE SCALE GENOMIC DNA]</scope>
</reference>
<reference key="7">
    <citation type="submission" date="2005-07" db="EMBL/GenBank/DDBJ databases">
        <authorList>
            <person name="Mural R.J."/>
            <person name="Istrail S."/>
            <person name="Sutton G."/>
            <person name="Florea L."/>
            <person name="Halpern A.L."/>
            <person name="Mobarry C.M."/>
            <person name="Lippert R."/>
            <person name="Walenz B."/>
            <person name="Shatkay H."/>
            <person name="Dew I."/>
            <person name="Miller J.R."/>
            <person name="Flanigan M.J."/>
            <person name="Edwards N.J."/>
            <person name="Bolanos R."/>
            <person name="Fasulo D."/>
            <person name="Halldorsson B.V."/>
            <person name="Hannenhalli S."/>
            <person name="Turner R."/>
            <person name="Yooseph S."/>
            <person name="Lu F."/>
            <person name="Nusskern D.R."/>
            <person name="Shue B.C."/>
            <person name="Zheng X.H."/>
            <person name="Zhong F."/>
            <person name="Delcher A.L."/>
            <person name="Huson D.H."/>
            <person name="Kravitz S.A."/>
            <person name="Mouchard L."/>
            <person name="Reinert K."/>
            <person name="Remington K.A."/>
            <person name="Clark A.G."/>
            <person name="Waterman M.S."/>
            <person name="Eichler E.E."/>
            <person name="Adams M.D."/>
            <person name="Hunkapiller M.W."/>
            <person name="Myers E.W."/>
            <person name="Venter J.C."/>
        </authorList>
    </citation>
    <scope>NUCLEOTIDE SEQUENCE [LARGE SCALE GENOMIC DNA]</scope>
</reference>
<reference key="8">
    <citation type="journal article" date="1998" name="Nature">
        <title>Chromatin remodelling by the glucocorticoid receptor requires the BRG1 complex.</title>
        <authorList>
            <person name="Fryer C.J."/>
            <person name="Archer T.K."/>
        </authorList>
    </citation>
    <scope>INTERACTION WITH NR3C1 AND PGR</scope>
</reference>
<reference key="9">
    <citation type="journal article" date="1999" name="Immunity">
        <title>Ikaros DNA-binding proteins direct formation of chromatin remodeling complexes in lymphocytes.</title>
        <authorList>
            <person name="Kim J."/>
            <person name="Sif S."/>
            <person name="Jones B."/>
            <person name="Jackson A."/>
            <person name="Koipally J."/>
            <person name="Heller E."/>
            <person name="Winandy S."/>
            <person name="Viel A."/>
            <person name="Sawyer A."/>
            <person name="Ikeda T."/>
            <person name="Kingston R."/>
            <person name="Georgopoulos K."/>
        </authorList>
    </citation>
    <scope>INTERACTION WITH IKZF1</scope>
</reference>
<reference key="10">
    <citation type="journal article" date="2002" name="Mol. Cell. Biol.">
        <title>BAF53 forms distinct nuclear complexes and functions as a critical c-Myc-interacting nuclear cofactor for oncogenic transformation.</title>
        <authorList>
            <person name="Park J."/>
            <person name="Wood M.A."/>
            <person name="Cole M.D."/>
        </authorList>
    </citation>
    <scope>IDENTIFICATION IN THE BAF53 COMPLEX WITH BAF53A; RUVBL1 AND TRRAP</scope>
    <scope>FUNCTION</scope>
</reference>
<reference key="11">
    <citation type="journal article" date="2003" name="Mol. Cell. Biol.">
        <title>BAF60a mediates critical interactions between nuclear receptors and the BRG1 chromatin-remodeling complex for transactivation.</title>
        <authorList>
            <person name="Hsiao P.W."/>
            <person name="Fryer C.J."/>
            <person name="Trotter K.W."/>
            <person name="Wang W."/>
            <person name="Archer T.K."/>
        </authorList>
    </citation>
    <scope>INTERACTION WITH NR3C1 AND SMARD1</scope>
</reference>
<reference key="12">
    <citation type="journal article" date="2004" name="Genes Dev.">
        <title>TopBP1 recruits Brg1/Brm to repress E2F1-induced apoptosis, a novel pRb-independent and E2F1-specific control for cell survival.</title>
        <authorList>
            <person name="Liu K."/>
            <person name="Luo Y."/>
            <person name="Lin F.-T."/>
            <person name="Lin W.-C."/>
        </authorList>
    </citation>
    <scope>FUNCTION</scope>
    <scope>INTERACTION WITH TOPBP1</scope>
</reference>
<reference key="13">
    <citation type="journal article" date="2005" name="Mol. Endocrinol.">
        <title>hZimp7, a novel PIAS-like protein, enhances androgen receptor-mediated transcription and interacts with SWI/SNF-like BAF complexes.</title>
        <authorList>
            <person name="Huang C.-Y."/>
            <person name="Beliakoff J."/>
            <person name="Li X."/>
            <person name="Lee J."/>
            <person name="Li X."/>
            <person name="Sharma M."/>
            <person name="Lim B."/>
            <person name="Sun Z."/>
        </authorList>
    </citation>
    <scope>INTERACTION WITH ZMIM2</scope>
</reference>
<reference key="14">
    <citation type="journal article" date="2006" name="Cell">
        <title>Global, in vivo, and site-specific phosphorylation dynamics in signaling networks.</title>
        <authorList>
            <person name="Olsen J.V."/>
            <person name="Blagoev B."/>
            <person name="Gnad F."/>
            <person name="Macek B."/>
            <person name="Kumar C."/>
            <person name="Mortensen P."/>
            <person name="Mann M."/>
        </authorList>
    </citation>
    <scope>PHOSPHORYLATION [LARGE SCALE ANALYSIS] AT THR-11 AND SER-1452</scope>
    <scope>IDENTIFICATION BY MASS SPECTROMETRY [LARGE SCALE ANALYSIS]</scope>
    <source>
        <tissue>Cervix carcinoma</tissue>
    </source>
</reference>
<reference key="15">
    <citation type="journal article" date="2006" name="Nat. Biotechnol.">
        <title>A probability-based approach for high-throughput protein phosphorylation analysis and site localization.</title>
        <authorList>
            <person name="Beausoleil S.A."/>
            <person name="Villen J."/>
            <person name="Gerber S.A."/>
            <person name="Rush J."/>
            <person name="Gygi S.P."/>
        </authorList>
    </citation>
    <scope>IDENTIFICATION BY MASS SPECTROMETRY [LARGE SCALE ANALYSIS]</scope>
    <source>
        <tissue>Cervix carcinoma</tissue>
    </source>
</reference>
<reference key="16">
    <citation type="journal article" date="2007" name="Science">
        <title>ATM and ATR substrate analysis reveals extensive protein networks responsive to DNA damage.</title>
        <authorList>
            <person name="Matsuoka S."/>
            <person name="Ballif B.A."/>
            <person name="Smogorzewska A."/>
            <person name="McDonald E.R. III"/>
            <person name="Hurov K.E."/>
            <person name="Luo J."/>
            <person name="Bakalarski C.E."/>
            <person name="Zhao Z."/>
            <person name="Solimini N."/>
            <person name="Lerenthal Y."/>
            <person name="Shiloh Y."/>
            <person name="Gygi S.P."/>
            <person name="Elledge S.J."/>
        </authorList>
    </citation>
    <scope>IDENTIFICATION BY MASS SPECTROMETRY [LARGE SCALE ANALYSIS]</scope>
    <source>
        <tissue>Embryonic kidney</tissue>
    </source>
</reference>
<reference key="17">
    <citation type="journal article" date="2008" name="Genes Dev.">
        <title>Regulation of muscle development by DPF3, a novel histone acetylation and methylation reader of the BAF chromatin remodeling complex.</title>
        <authorList>
            <person name="Lange M."/>
            <person name="Kaynak B."/>
            <person name="Forster U.B."/>
            <person name="Toenjes M."/>
            <person name="Fischer J.J."/>
            <person name="Grimm C."/>
            <person name="Schlesinger J."/>
            <person name="Just S."/>
            <person name="Dunkel I."/>
            <person name="Krueger T."/>
            <person name="Mebus S."/>
            <person name="Lehrach H."/>
            <person name="Lurz R."/>
            <person name="Gobom J."/>
            <person name="Rottbauer W."/>
            <person name="Abdelilah-Seyfried S."/>
            <person name="Sperling S."/>
        </authorList>
    </citation>
    <scope>IDENTIFICATION IN THE BAF COMPLEX</scope>
    <scope>IDENTIFICATION BY MASS SPECTROMETRY</scope>
</reference>
<reference key="18">
    <citation type="journal article" date="2008" name="Proc. Natl. Acad. Sci. U.S.A.">
        <title>A quantitative atlas of mitotic phosphorylation.</title>
        <authorList>
            <person name="Dephoure N."/>
            <person name="Zhou C."/>
            <person name="Villen J."/>
            <person name="Beausoleil S.A."/>
            <person name="Bakalarski C.E."/>
            <person name="Elledge S.J."/>
            <person name="Gygi S.P."/>
        </authorList>
    </citation>
    <scope>PHOSPHORYLATION [LARGE SCALE ANALYSIS] AT SER-613; SER-1382; SER-1452; SER-1570; SER-1575 AND SER-1586</scope>
    <scope>IDENTIFICATION BY MASS SPECTROMETRY [LARGE SCALE ANALYSIS]</scope>
    <source>
        <tissue>Cervix carcinoma</tissue>
    </source>
</reference>
<reference key="19">
    <citation type="journal article" date="2009" name="Anal. Chem.">
        <title>Lys-N and trypsin cover complementary parts of the phosphoproteome in a refined SCX-based approach.</title>
        <authorList>
            <person name="Gauci S."/>
            <person name="Helbig A.O."/>
            <person name="Slijper M."/>
            <person name="Krijgsveld J."/>
            <person name="Heck A.J."/>
            <person name="Mohammed S."/>
        </authorList>
    </citation>
    <scope>IDENTIFICATION BY MASS SPECTROMETRY [LARGE SCALE ANALYSIS]</scope>
</reference>
<reference key="20">
    <citation type="journal article" date="2009" name="Nature">
        <title>Telomerase modulates Wnt signalling by association with target gene chromatin.</title>
        <authorList>
            <person name="Park J.I."/>
            <person name="Venteicher A.S."/>
            <person name="Hong J.Y."/>
            <person name="Choi J."/>
            <person name="Jun S."/>
            <person name="Shkreli M."/>
            <person name="Chang W."/>
            <person name="Meng Z."/>
            <person name="Cheung P."/>
            <person name="Ji H."/>
            <person name="McLaughlin M."/>
            <person name="Veenstra T.D."/>
            <person name="Nusse R."/>
            <person name="McCrea P.D."/>
            <person name="Artandi S.E."/>
        </authorList>
    </citation>
    <scope>INTERACTION WITH TERT</scope>
    <scope>FUNCTION</scope>
</reference>
<reference key="21">
    <citation type="journal article" date="2009" name="Sci. Signal.">
        <title>Quantitative phosphoproteomic analysis of T cell receptor signaling reveals system-wide modulation of protein-protein interactions.</title>
        <authorList>
            <person name="Mayya V."/>
            <person name="Lundgren D.H."/>
            <person name="Hwang S.-I."/>
            <person name="Rezaul K."/>
            <person name="Wu L."/>
            <person name="Eng J.K."/>
            <person name="Rodionov V."/>
            <person name="Han D.K."/>
        </authorList>
    </citation>
    <scope>PHOSPHORYLATION [LARGE SCALE ANALYSIS] AT THR-353; THR-609; SER-610; SER-613; SER-695; SER-1570; SER-1575 AND SER-1627</scope>
    <scope>IDENTIFICATION BY MASS SPECTROMETRY [LARGE SCALE ANALYSIS]</scope>
    <source>
        <tissue>Leukemic T-cell</tissue>
    </source>
</reference>
<reference key="22">
    <citation type="journal article" date="2009" name="Science">
        <title>Lysine acetylation targets protein complexes and co-regulates major cellular functions.</title>
        <authorList>
            <person name="Choudhary C."/>
            <person name="Kumar C."/>
            <person name="Gnad F."/>
            <person name="Nielsen M.L."/>
            <person name="Rehman M."/>
            <person name="Walther T.C."/>
            <person name="Olsen J.V."/>
            <person name="Mann M."/>
        </authorList>
    </citation>
    <scope>ACETYLATION [LARGE SCALE ANALYSIS] AT LYS-188</scope>
    <scope>IDENTIFICATION BY MASS SPECTROMETRY [LARGE SCALE ANALYSIS]</scope>
</reference>
<reference key="23">
    <citation type="journal article" date="2010" name="Am. J. Hum. Genet.">
        <title>Germline nonsense mutation and somatic inactivation of SMARCA4/BRG1 in a family with rhabdoid tumor predisposition syndrome.</title>
        <authorList>
            <person name="Schneppenheim R."/>
            <person name="Fruhwald M.C."/>
            <person name="Gesk S."/>
            <person name="Hasselblatt M."/>
            <person name="Jeibmann A."/>
            <person name="Kordes U."/>
            <person name="Kreuz M."/>
            <person name="Leuschner I."/>
            <person name="Martin Subero J.I."/>
            <person name="Obser T."/>
            <person name="Oyen F."/>
            <person name="Vater I."/>
            <person name="Siebert R."/>
        </authorList>
    </citation>
    <scope>INVOLVEMENT IN RTPS2</scope>
</reference>
<reference key="24">
    <citation type="journal article" date="2010" name="J. Biol. Chem.">
        <title>Requiem protein links RelB/p52 and the Brm-type SWI/SNF complex in a noncanonical NF-kappaB pathway.</title>
        <authorList>
            <person name="Tando T."/>
            <person name="Ishizaka A."/>
            <person name="Watanabe H."/>
            <person name="Ito T."/>
            <person name="Iida S."/>
            <person name="Haraguchi T."/>
            <person name="Mizutani T."/>
            <person name="Izumi T."/>
            <person name="Isobe T."/>
            <person name="Akiyama T."/>
            <person name="Inoue J."/>
            <person name="Iba H."/>
        </authorList>
    </citation>
    <scope>INTERACTION WITH DEPF2</scope>
</reference>
<reference key="25">
    <citation type="journal article" date="2010" name="Oncogene">
        <title>ZEB1 represses E-cadherin and induces an EMT by recruiting the SWI/SNF chromatin-remodeling protein BRG1.</title>
        <authorList>
            <person name="Sanchez-Tillo E."/>
            <person name="Lazaro A."/>
            <person name="Torrent R."/>
            <person name="Cuatrecasas M."/>
            <person name="Vaquero E.C."/>
            <person name="Castells A."/>
            <person name="Engel P."/>
            <person name="Postigo A."/>
        </authorList>
    </citation>
    <scope>FUNCTION</scope>
    <scope>SUBCELLULAR LOCATION</scope>
    <scope>INTERACTION WITH ZEB1</scope>
    <scope>TISSUE SPECIFICITY</scope>
</reference>
<reference key="26">
    <citation type="journal article" date="2010" name="Sci. Signal.">
        <title>Quantitative phosphoproteomics reveals widespread full phosphorylation site occupancy during mitosis.</title>
        <authorList>
            <person name="Olsen J.V."/>
            <person name="Vermeulen M."/>
            <person name="Santamaria A."/>
            <person name="Kumar C."/>
            <person name="Miller M.L."/>
            <person name="Jensen L.J."/>
            <person name="Gnad F."/>
            <person name="Cox J."/>
            <person name="Jensen T.S."/>
            <person name="Nigg E.A."/>
            <person name="Brunak S."/>
            <person name="Mann M."/>
        </authorList>
    </citation>
    <scope>PHOSPHORYLATION [LARGE SCALE ANALYSIS] AT SER-695; SER-699; SER-1570 AND SER-1575</scope>
    <scope>IDENTIFICATION BY MASS SPECTROMETRY [LARGE SCALE ANALYSIS]</scope>
    <source>
        <tissue>Cervix carcinoma</tissue>
    </source>
</reference>
<reference key="27">
    <citation type="journal article" date="2011" name="BMC Syst. Biol.">
        <title>Initial characterization of the human central proteome.</title>
        <authorList>
            <person name="Burkard T.R."/>
            <person name="Planyavsky M."/>
            <person name="Kaupe I."/>
            <person name="Breitwieser F.P."/>
            <person name="Buerckstuemmer T."/>
            <person name="Bennett K.L."/>
            <person name="Superti-Furga G."/>
            <person name="Colinge J."/>
        </authorList>
    </citation>
    <scope>IDENTIFICATION BY MASS SPECTROMETRY [LARGE SCALE ANALYSIS]</scope>
</reference>
<reference key="28">
    <citation type="journal article" date="2011" name="Sci. Signal.">
        <title>System-wide temporal characterization of the proteome and phosphoproteome of human embryonic stem cell differentiation.</title>
        <authorList>
            <person name="Rigbolt K.T."/>
            <person name="Prokhorova T.A."/>
            <person name="Akimov V."/>
            <person name="Henningsen J."/>
            <person name="Johansen P.T."/>
            <person name="Kratchmarova I."/>
            <person name="Kassem M."/>
            <person name="Mann M."/>
            <person name="Olsen J.V."/>
            <person name="Blagoev B."/>
        </authorList>
    </citation>
    <scope>PHOSPHORYLATION [LARGE SCALE ANALYSIS] AT SER-613; SER-695; SER-699; SER-1382; SER-1627 AND SER-1631</scope>
    <scope>IDENTIFICATION BY MASS SPECTROMETRY [LARGE SCALE ANALYSIS]</scope>
</reference>
<reference key="29">
    <citation type="journal article" date="2012" name="J. Biol. Chem.">
        <title>Novel evolutionary-conserved role for the activity-dependent neuroprotective protein (ADNP) family that is important for erythropoiesis.</title>
        <authorList>
            <person name="Dresner E."/>
            <person name="Malishkevich A."/>
            <person name="Arviv C."/>
            <person name="Leibman Barak S."/>
            <person name="Alon S."/>
            <person name="Ofir R."/>
            <person name="Gothilf Y."/>
            <person name="Gozes I."/>
        </authorList>
    </citation>
    <scope>INTERACTION WITH ADNP2</scope>
</reference>
<reference key="30">
    <citation type="journal article" date="2013" name="J. Proteome Res.">
        <title>Toward a comprehensive characterization of a human cancer cell phosphoproteome.</title>
        <authorList>
            <person name="Zhou H."/>
            <person name="Di Palma S."/>
            <person name="Preisinger C."/>
            <person name="Peng M."/>
            <person name="Polat A.N."/>
            <person name="Heck A.J."/>
            <person name="Mohammed S."/>
        </authorList>
    </citation>
    <scope>PHOSPHORYLATION [LARGE SCALE ANALYSIS] AT SER-695; SER-699 AND SER-1452</scope>
    <scope>IDENTIFICATION BY MASS SPECTROMETRY [LARGE SCALE ANALYSIS]</scope>
    <source>
        <tissue>Cervix carcinoma</tissue>
        <tissue>Erythroleukemia</tissue>
    </source>
</reference>
<reference key="31">
    <citation type="journal article" date="2014" name="J. Proteomics">
        <title>An enzyme assisted RP-RPLC approach for in-depth analysis of human liver phosphoproteome.</title>
        <authorList>
            <person name="Bian Y."/>
            <person name="Song C."/>
            <person name="Cheng K."/>
            <person name="Dong M."/>
            <person name="Wang F."/>
            <person name="Huang J."/>
            <person name="Sun D."/>
            <person name="Wang L."/>
            <person name="Ye M."/>
            <person name="Zou H."/>
        </authorList>
    </citation>
    <scope>PHOSPHORYLATION [LARGE SCALE ANALYSIS] AT SER-613 AND SER-1631</scope>
    <scope>IDENTIFICATION BY MASS SPECTROMETRY [LARGE SCALE ANALYSIS]</scope>
    <source>
        <tissue>Liver</tissue>
    </source>
</reference>
<reference key="32">
    <citation type="journal article" date="2015" name="Genes Dev.">
        <title>Screen identifies bromodomain protein ZMYND8 in chromatin recognition of transcription-associated DNA damage that promotes homologous recombination.</title>
        <authorList>
            <person name="Gong F."/>
            <person name="Chiu L.Y."/>
            <person name="Cox B."/>
            <person name="Aymard F."/>
            <person name="Clouaire T."/>
            <person name="Leung J.W."/>
            <person name="Cammarata M."/>
            <person name="Perez M."/>
            <person name="Agarwal P."/>
            <person name="Brodbelt J.S."/>
            <person name="Legube G."/>
            <person name="Miller K.M."/>
        </authorList>
    </citation>
    <scope>SUBCELLULAR LOCATION</scope>
</reference>
<reference key="33">
    <citation type="journal article" date="2017" name="Hum. Mutat.">
        <title>Heterozygous variants in ACTL6A, encoding a component of the BAF complex, are associated with intellectual disability.</title>
        <authorList>
            <person name="Marom R."/>
            <person name="Jain M."/>
            <person name="Burrage L.C."/>
            <person name="Song I.W."/>
            <person name="Graham B.H."/>
            <person name="Brown C.W."/>
            <person name="Stevens S.J.C."/>
            <person name="Stegmann A.P.A."/>
            <person name="Gunter A.T."/>
            <person name="Kaplan J.D."/>
            <person name="Gavrilova R.H."/>
            <person name="Shinawi M."/>
            <person name="Rosenfeld J.A."/>
            <person name="Bae Y."/>
            <person name="Tran A.A."/>
            <person name="Chen Y."/>
            <person name="Lu J.T."/>
            <person name="Gibbs R.A."/>
            <person name="Eng C."/>
            <person name="Yang Y."/>
            <person name="Rousseau J."/>
            <person name="de Vries B.B.A."/>
            <person name="Campeau P.M."/>
            <person name="Lee B."/>
        </authorList>
    </citation>
    <scope>INTERACTION WITH ACTL6A</scope>
</reference>
<reference key="34">
    <citation type="journal article" date="2017" name="Nat. Struct. Mol. Biol.">
        <title>Site-specific mapping of the human SUMO proteome reveals co-modification with phosphorylation.</title>
        <authorList>
            <person name="Hendriks I.A."/>
            <person name="Lyon D."/>
            <person name="Young C."/>
            <person name="Jensen L.J."/>
            <person name="Vertegaal A.C."/>
            <person name="Nielsen M.L."/>
        </authorList>
    </citation>
    <scope>SUMOYLATION [LARGE SCALE ANALYSIS] AT LYS-1365</scope>
    <scope>IDENTIFICATION BY MASS SPECTROMETRY [LARGE SCALE ANALYSIS]</scope>
</reference>
<reference key="35">
    <citation type="journal article" date="2012" name="J. Biol. Chem.">
        <title>SWI/SNF chromatin-remodeling factors: multiscale analyses and diverse functions.</title>
        <authorList>
            <person name="Euskirchen G."/>
            <person name="Auerbach R.K."/>
            <person name="Snyder M."/>
        </authorList>
    </citation>
    <scope>REVIEW ON SWI/SNF CHROMATIN REMODELING COMPLEXES</scope>
</reference>
<reference key="36">
    <citation type="journal article" date="2015" name="Sci. Adv.">
        <title>Mammalian SWI/SNF chromatin remodeling complexes and cancer: Mechanistic insights gained from human genomics.</title>
        <authorList>
            <person name="Kadoch C."/>
            <person name="Crabtree G.R."/>
        </authorList>
    </citation>
    <scope>REVIEW ON SWI/SNF CHROMATIN REMODELING COMPLEXES</scope>
</reference>
<reference key="37">
    <citation type="journal article" date="2018" name="J. Biol. Chem.">
        <title>Glioma tumor suppressor candidate region gene 1 (GLTSCR1) and its paralog GLTSCR1-like form SWI/SNF chromatin remodeling subcomplexes.</title>
        <authorList>
            <person name="Alpsoy A."/>
            <person name="Dykhuizen E.C."/>
        </authorList>
    </citation>
    <scope>FUNCTION</scope>
    <scope>IDENTIFICATION IN THE GBAF COMPLEX</scope>
</reference>
<reference key="38">
    <citation type="journal article" date="2020" name="Nucleic Acids Res.">
        <title>HRP2-DPF3a-BAF complex coordinates histone modification and chromatin remodeling to regulate myogenic gene transcription.</title>
        <authorList>
            <person name="Zhu X."/>
            <person name="Lan B."/>
            <person name="Yi X."/>
            <person name="He C."/>
            <person name="Dang L."/>
            <person name="Zhou X."/>
            <person name="Lu Y."/>
            <person name="Sun Y."/>
            <person name="Liu Z."/>
            <person name="Bai X."/>
            <person name="Zhang K."/>
            <person name="Li B."/>
            <person name="Li M.J."/>
            <person name="Chen Y."/>
            <person name="Zhang L."/>
        </authorList>
    </citation>
    <scope>INTERACTION WITH HDGFL2 AND DPF3</scope>
    <scope>FUNCTION</scope>
</reference>
<reference key="39">
    <citation type="journal article" date="2018" name="J. Med. Chem.">
        <title>Discovery of Orally Active Inhibitors of Brahma Homolog (BRM)/SMARCA2 ATPase Activity for the Treatment of Brahma Related Gene 1 (BRG1)/SMARCA4-Mutant Cancers.</title>
        <authorList>
            <person name="Papillon J.P.N."/>
            <person name="Nakajima K."/>
            <person name="Adair C.D."/>
            <person name="Hempel J."/>
            <person name="Jouk A.O."/>
            <person name="Karki R.G."/>
            <person name="Mathieu S."/>
            <person name="Moebitz H."/>
            <person name="Ntaganda R."/>
            <person name="Smith T."/>
            <person name="Visser M."/>
            <person name="Hill S.E."/>
            <person name="Hurtado F.K."/>
            <person name="Chenail G."/>
            <person name="Bhang H.C."/>
            <person name="Bric A."/>
            <person name="Xiang K."/>
            <person name="Bushold G."/>
            <person name="Gilbert T."/>
            <person name="Vattay A."/>
            <person name="Dooley J."/>
            <person name="Costa E.A."/>
            <person name="Park I."/>
            <person name="Li A."/>
            <person name="Farley D."/>
            <person name="Lounkine E."/>
            <person name="Yue Q.K."/>
            <person name="Xie X."/>
            <person name="Zhu X."/>
            <person name="Kulathila R."/>
            <person name="King D."/>
            <person name="Hu T."/>
            <person name="Vulic K."/>
            <person name="Cantwell J."/>
            <person name="Luu C."/>
            <person name="Jagani Z."/>
        </authorList>
    </citation>
    <scope>FUNCTION</scope>
    <scope>CATALYTIC ACTIVITY</scope>
</reference>
<reference key="40">
    <citation type="journal article" date="2007" name="Biochemistry">
        <title>Solution structure of human Brg1 bromodomain and its specific binding to acetylated histone tails.</title>
        <authorList>
            <person name="Shen W."/>
            <person name="Xu C."/>
            <person name="Huang W."/>
            <person name="Zhang J."/>
            <person name="Carlson J.E."/>
            <person name="Tu X."/>
            <person name="Wu J."/>
            <person name="Shi Y."/>
        </authorList>
    </citation>
    <scope>STRUCTURE BY NMR OF 1452-1570 IN COMPLEX WITH ACETYLATED HISTONES</scope>
    <scope>MUTAGENESIS OF VAL-1484; PHE-1539 AND ASN-1540</scope>
</reference>
<reference key="41">
    <citation type="journal article" date="2007" name="ChemBioChem">
        <title>Structural ramification for acetyl-lysine recognition by the bromodomain of human BRG1 protein, a central ATPase of the SWI/SNF remodeling complex.</title>
        <authorList>
            <person name="Singh M."/>
            <person name="Popowicz G.M."/>
            <person name="Krajewski M."/>
            <person name="Holak T.A."/>
        </authorList>
    </citation>
    <scope>X-RAY CRYSTALLOGRAPHY (1.5 ANGSTROMS) OF 1448-1575 IN COMPLEX WITH ACETYLATED HISTONE 3</scope>
</reference>
<reference evidence="40" key="42">
    <citation type="journal article" date="2018" name="J. Biol. Chem.">
        <title>The BRD3 ET domain recognizes a short peptide motif through a mechanism that is conserved across chromatin remodelers and transcriptional regulators.</title>
        <authorList>
            <person name="Wai D.C.C."/>
            <person name="Szyszka T.N."/>
            <person name="Campbell A.E."/>
            <person name="Kwong C."/>
            <person name="Wilkinson-White L.E."/>
            <person name="Silva A.P.G."/>
            <person name="Low J.K.K."/>
            <person name="Kwan A.H."/>
            <person name="Gamsjaeger R."/>
            <person name="Chalmers J.D."/>
            <person name="Patrick W.M."/>
            <person name="Lu B."/>
            <person name="Vakoc C.R."/>
            <person name="Blobel G.A."/>
            <person name="Mackay J.P."/>
        </authorList>
    </citation>
    <scope>STRUCTURE BY NMR OF 1591-1602 IN COMPLEX WITH BRD3</scope>
    <scope>INTERACTION WITH BRD3</scope>
    <scope>DOMAIN</scope>
</reference>
<reference key="43">
    <citation type="journal article" date="2012" name="Nat. Genet.">
        <title>Mutations affecting components of the SWI/SNF complex cause Coffin-Siris syndrome.</title>
        <authorList>
            <person name="Tsurusaki Y."/>
            <person name="Okamoto N."/>
            <person name="Ohashi H."/>
            <person name="Kosho T."/>
            <person name="Imai Y."/>
            <person name="Hibi-Ko Y."/>
            <person name="Kaname T."/>
            <person name="Naritomi K."/>
            <person name="Kawame H."/>
            <person name="Wakui K."/>
            <person name="Fukushima Y."/>
            <person name="Homma T."/>
            <person name="Kato M."/>
            <person name="Hiraki Y."/>
            <person name="Yamagata T."/>
            <person name="Yano S."/>
            <person name="Mizuno S."/>
            <person name="Sakazume S."/>
            <person name="Ishii T."/>
            <person name="Nagai T."/>
            <person name="Shiina M."/>
            <person name="Ogata K."/>
            <person name="Ohta T."/>
            <person name="Niikawa N."/>
            <person name="Miyatake S."/>
            <person name="Okada I."/>
            <person name="Mizuguchi T."/>
            <person name="Doi H."/>
            <person name="Saitsu H."/>
            <person name="Miyake N."/>
            <person name="Matsumoto N."/>
        </authorList>
    </citation>
    <scope>VARIANTS CSS4 LYS-546 DEL; MET-859; CYS-885; PHE-921; THR-1011 AND GLY-1157</scope>
</reference>
<reference key="44">
    <citation type="journal article" date="2024" name="J. Med. Genet.">
        <title>SMARCA4 mutation causes human otosclerosis and a similar phenotype in mice.</title>
        <authorList>
            <person name="Drabkin M."/>
            <person name="Jean M.M."/>
            <person name="Noy Y."/>
            <person name="Halperin D."/>
            <person name="Yogev Y."/>
            <person name="Wormser O."/>
            <person name="Proskorovski-Ohayon R."/>
            <person name="Dolgin V."/>
            <person name="Levaot N."/>
            <person name="Brumfeld V."/>
            <person name="Ovadia S."/>
            <person name="Kishner M."/>
            <person name="Kazenell U."/>
            <person name="Avraham K.B."/>
            <person name="Shelef I."/>
            <person name="Birk O.S."/>
        </authorList>
    </citation>
    <scope>INVOLVEMENT IN OTSC12</scope>
    <scope>VARIANT OTSC12 LYS-1578</scope>
    <scope>CHARACTERIZATION OF VARIANT OTSC12 LYS-1578</scope>
</reference>
<comment type="function">
    <text evidence="2 4 14 19 21 26 28 29 34 35">ATPase involved in transcriptional activation and repression of select genes by chromatin remodeling (alteration of DNA-nucleosome topology). Component of SWI/SNF chromatin remodeling complexes that carry out key enzymatic activities, changing chromatin structure by altering DNA-histone contacts within a nucleosome in an ATP-dependent manner (PubMed:15075294, PubMed:29374058, PubMed:30339381, PubMed:32459350). Component of the CREST-BRG1 complex, a multiprotein complex that regulates promoter activation by orchestrating the calcium-dependent release of a repressor complex and the recruitment of an activator complex. In resting neurons, transcription of the c-FOS promoter is inhibited by SMARCA4-dependent recruitment of a phospho-RB1-HDAC repressor complex. Upon calcium influx, RB1 is dephosphorylated by calcineurin, which leads to release of the repressor complex. At the same time, there is increased recruitment of CREBBP to the promoter by a CREST-dependent mechanism, which leads to transcriptional activation. The CREST-BRG1 complex also binds to the NR2B promoter, and activity-dependent induction of NR2B expression involves the release of HDAC1 and recruitment of CREBBP (By similarity). Belongs to the neural progenitors-specific chromatin remodeling complex (npBAF complex) and the neuron-specific chromatin remodeling complex (nBAF complex). During neural development, a switch from a stem/progenitor to a postmitotic chromatin remodeling mechanism occurs as neurons exit the cell cycle and become committed to their adult state. The transition from proliferating neural stem/progenitor cells to postmitotic neurons requires a switch in subunit composition of the npBAF and nBAF complexes. As neural progenitors exit mitosis and differentiate into neurons, npBAF complexes which contain ACTL6A/BAF53A and PHF10/BAF45A, are exchanged for homologous alternative ACTL6B/BAF53B and DPF1/BAF45B or DPF3/BAF45C subunits in neuron-specific complexes (nBAF). The npBAF complex is essential for the self-renewal/proliferative capacity of the multipotent neural stem cells. The nBAF complex along with CREST plays a role regulating the activity of genes essential for dendrite growth. SMARCA4/BAF190A may promote neural stem cell self-renewal/proliferation by enhancing Notch-dependent proliferative signals, while concurrently making the neural stem cell insensitive to SHH-dependent differentiating cues (By similarity). Acts as a corepressor of ZEB1 to regulate E-cadherin transcription and is required for induction of epithelial-mesenchymal transition (EMT) by ZEB1 (PubMed:20418909). Binds via DLX1 to enhancers located in the intergenic region between DLX5 and DLX6 and this binding is stabilized by the long non-coding RNA (lncRNA) Evf2 (By similarity). Binds to RNA in a promiscuous manner (By similarity). In brown adipose tissue, involved in the regulation of thermogenic genes expression (By similarity).</text>
</comment>
<comment type="catalytic activity">
    <reaction evidence="28">
        <text>ATP + H2O = ADP + phosphate + H(+)</text>
        <dbReference type="Rhea" id="RHEA:13065"/>
        <dbReference type="ChEBI" id="CHEBI:15377"/>
        <dbReference type="ChEBI" id="CHEBI:15378"/>
        <dbReference type="ChEBI" id="CHEBI:30616"/>
        <dbReference type="ChEBI" id="CHEBI:43474"/>
        <dbReference type="ChEBI" id="CHEBI:456216"/>
    </reaction>
    <physiologicalReaction direction="left-to-right" evidence="38">
        <dbReference type="Rhea" id="RHEA:13066"/>
    </physiologicalReaction>
</comment>
<comment type="activity regulation">
    <text evidence="2">Binding to RNAs including lncRNA Evf2 leads to inhibition of SMARCA4 ATPase and chromatin remodeling activities.</text>
</comment>
<comment type="subunit">
    <text evidence="2 11 12 13 14 15 16 17 18 19 21 22 25 26 27 29 31 34 35">Component of the multiprotein chromatin-remodeling complexes SWI/SNF: SWI/SNF-A (BAF), SWI/SNF-B (PBAF) and related complexes. The canonical complex contains a catalytic subunit (either SMARCA4/BRG1/BAF190A or SMARCA2/BRM/BAF190B) and at least SMARCE1, ACTL6A/BAF53, SMARCC1/BAF155, SMARCC2/BAF170, and SMARCB1/SNF5/BAF47. Other subunits specific to each of the complexes may also be present permitting several possible developmental- and tissue-specific combinations (PubMed:22952240, PubMed:26601204). Component of the BAF complex, which includes at least actin (ACTB), ARID1A/BAF250A, ARID1B/BAF250B, SMARCA2/BRM, SMARCA4/BRG1/BAF190A, ACTL6A/BAF53, ACTL6B/BAF53B, SMARCE1/BAF57, SMARCC1/BAF155, SMARCC2/BAF170, SMARCB1/SNF5/INI1, and one or more SMARCD1/BAF60A, SMARCD2/BAF60B, or SMARCD3/BAF60C. In muscle cells, the BAF complex also contains DPF3 (PubMed:18765789). Component of neural progenitors-specific chromatin remodeling complex (npBAF complex) composed of at least, ARID1A/BAF250A or ARID1B/BAF250B, SMARCD1/BAF60A, SMARCD3/BAF60C, SMARCA2/BRM/BAF190B, SMARCA4/BRG1/BAF190A, SMARCB1/BAF47, SMARCC1/BAF155, SMARCE1/BAF57, SMARCC2/BAF170, PHF10/BAF45A, ACTL6A/BAF53A and actin. Component of neuron-specific chromatin remodeling complex (nBAF complex) composed of at least, ARID1A/BAF250A or ARID1B/BAF250B, SMARCD1/BAF60A, SMARCD3/BAF60C, SMARCA2/BRM/BAF190B, SMARCA4/BRG1/BAF190A, SMARCB1/BAF47, SMARCC1/BAF155, SMARCE1/BAF57, SMARCC2/BAF170, DPF1/BAF45B, DPF3/BAF45C, ACTL6B/BAF53B and actin. Component of the SWI/SNF-B (PBAF) chromatin remodeling complex, at least composed of SMARCA4/BRG1, SMARCB1/BAF47/SNF5, ACTL6A/BAF53A or ACTL6B/BAF53B, SMARCE1/BAF57, SMARCD1/BAF60A, SMARCD2/BAF60B, perhaps SMARCD3/BAF60C, SMARCC1/BAF155, SMARCC2/BAF170, PBRM1/BAF180, ARID2/BAF200 and actin (PubMed:26601204). Component of SWI/SNF (GBAF) subcomplex, which includes at least BICRA or BICRAL (mutually exclusive), BRD9, SS18, SMARCA2/BRM, SMARCA4/BRG1/BAF190A, ACTL6A/BAF53, SMARCC1/BAF155, and SMARCD1/BAF60A (PubMed:29374058). Component of the BAF53 complex, at least composed of BAF53A, RUVBL1, SMARCA4/BRG1/BAF190A, and TRRAP, which preferentially acetylates histone H4 (and H2A) within nucleosomes (PubMed:11839798). Component of the CREST-BRG1 complex, at least composed of SMARCA4/BRG1/BAF190A, SS18L1/CREST, HDAC1, RB1 and SP1 (By similarity). Interacts with PHF10/BAF45A (By similarity). Interacts with MYOG (By similarity). Interacts directly with IKFZ1; the interaction associates IKFZ1 with the BAF complex (PubMed:10204490). Interacts with ZEB1 (via N-terminus) (PubMed:20418909). Interacts with NR3C1, PGR, SMARD1, TOPBP1 and ZMIM2/ZIMP7 (PubMed:12917342, PubMed:15075294, PubMed:16051670, PubMed:9590696). Interacts with (via the bromodomain) with TERT; the interaction regulates Wnt-mediated signaling (PubMed:19571879). Interacts with TBX21 in a KDM6B-dependent manner (By similarity). Interacts with KDM6A and KDM6B (By similarity). Interacts with HNRNPU; this interaction occurs in embryonic stem cells and stimulates global Pol II-mediated transcription (By similarity). Interacts with ACTL6A (PubMed:28649782). Interacts with DLX1 (By similarity). Interacts with DPF2 (PubMed:20460684). Interacts with DPF3a (isoform 2 of DPF3/BAF45C) and with HDGFL2 in a DPF3a-dependent manner (PubMed:32459350). May interact with ADNP2 (PubMed:23071114). Interacts with LETMD1 (via C-terminal); the interaction regulates transcriptional expression of thermogenic genes in brown adipose tissue (By similarity). Interacts (via KIKL motif) with BRD3 (via NET domain) (PubMed:29567837).</text>
</comment>
<comment type="interaction">
    <interactant intactId="EBI-302489">
        <id>P51532</id>
    </interactant>
    <interactant intactId="EBI-637887">
        <id>O14497</id>
        <label>ARID1A</label>
    </interactant>
    <organismsDiffer>false</organismsDiffer>
    <experiments>28</experiments>
</comment>
<comment type="interaction">
    <interactant intactId="EBI-302489">
        <id>P51532</id>
    </interactant>
    <interactant intactId="EBI-679921">
        <id>Q8NFD5</id>
        <label>ARID1B</label>
    </interactant>
    <organismsDiffer>false</organismsDiffer>
    <experiments>5</experiments>
</comment>
<comment type="interaction">
    <interactant intactId="EBI-302489">
        <id>P51532</id>
    </interactant>
    <interactant intactId="EBI-637818">
        <id>Q68CP9</id>
        <label>ARID2</label>
    </interactant>
    <organismsDiffer>false</organismsDiffer>
    <experiments>10</experiments>
</comment>
<comment type="interaction">
    <interactant intactId="EBI-302489">
        <id>P51532</id>
    </interactant>
    <interactant intactId="EBI-494830">
        <id>P16104</id>
        <label>H2AX</label>
    </interactant>
    <organismsDiffer>false</organismsDiffer>
    <experiments>9</experiments>
</comment>
<comment type="interaction">
    <interactant intactId="EBI-302489">
        <id>P51532</id>
    </interactant>
    <interactant intactId="EBI-637807">
        <id>Q86U86</id>
        <label>PBRM1</label>
    </interactant>
    <organismsDiffer>false</organismsDiffer>
    <experiments>7</experiments>
</comment>
<comment type="interaction">
    <interactant intactId="EBI-302489">
        <id>P51532</id>
    </interactant>
    <interactant intactId="EBI-632552">
        <id>Q06330</id>
        <label>RBPJ</label>
    </interactant>
    <organismsDiffer>false</organismsDiffer>
    <experiments>2</experiments>
</comment>
<comment type="interaction">
    <interactant intactId="EBI-302489">
        <id>P51532</id>
    </interactant>
    <interactant intactId="EBI-926706">
        <id>Q13127</id>
        <label>REST</label>
    </interactant>
    <organismsDiffer>false</organismsDiffer>
    <experiments>2</experiments>
</comment>
<comment type="interaction">
    <interactant intactId="EBI-302489">
        <id>P51532</id>
    </interactant>
    <interactant intactId="EBI-358419">
        <id>Q12824</id>
        <label>SMARCB1</label>
    </interactant>
    <organismsDiffer>false</organismsDiffer>
    <experiments>39</experiments>
</comment>
<comment type="interaction">
    <interactant intactId="EBI-302489">
        <id>P51532</id>
    </interactant>
    <interactant intactId="EBI-355653">
        <id>Q92922</id>
        <label>SMARCC1</label>
    </interactant>
    <organismsDiffer>false</organismsDiffer>
    <experiments>29</experiments>
</comment>
<comment type="interaction">
    <interactant intactId="EBI-302489">
        <id>P51532</id>
    </interactant>
    <interactant intactId="EBI-358489">
        <id>Q96GM5</id>
        <label>SMARCD1</label>
    </interactant>
    <organismsDiffer>false</organismsDiffer>
    <experiments>14</experiments>
</comment>
<comment type="interaction">
    <interactant intactId="EBI-302489">
        <id>P51532</id>
    </interactant>
    <interactant intactId="EBI-455096">
        <id>Q969G3-2</id>
        <label>SMARCE1</label>
    </interactant>
    <organismsDiffer>false</organismsDiffer>
    <experiments>2</experiments>
</comment>
<comment type="interaction">
    <interactant intactId="EBI-302489">
        <id>P51532</id>
    </interactant>
    <interactant intactId="EBI-6901002">
        <id>A4PIV7</id>
        <label>SYT-SSX1</label>
    </interactant>
    <organismsDiffer>false</organismsDiffer>
    <experiments>14</experiments>
</comment>
<comment type="interaction">
    <interactant intactId="EBI-302489">
        <id>P51532</id>
    </interactant>
    <interactant intactId="EBI-1772203">
        <id>O14746</id>
        <label>TERT</label>
    </interactant>
    <organismsDiffer>false</organismsDiffer>
    <experiments>8</experiments>
</comment>
<comment type="interaction">
    <interactant intactId="EBI-302489">
        <id>P51532</id>
    </interactant>
    <interactant intactId="EBI-1187143">
        <id>P06536</id>
        <label>Nr3c1</label>
    </interactant>
    <organismsDiffer>true</organismsDiffer>
    <experiments>3</experiments>
</comment>
<comment type="subcellular location">
    <subcellularLocation>
        <location evidence="8 21 24">Nucleus</location>
    </subcellularLocation>
    <text evidence="2 24">Colocalizes with long non-coding RNA Evf2 in nuclear RNA clouds (By similarity). Localizes to sites of DNA damage (PubMed:25593309).</text>
</comment>
<comment type="alternative products">
    <event type="alternative splicing"/>
    <isoform>
        <id>P51532-1</id>
        <name>1</name>
        <sequence type="displayed"/>
    </isoform>
    <isoform>
        <id>P51532-2</id>
        <name>2</name>
        <sequence type="described" ref="VSP_043137"/>
    </isoform>
    <isoform>
        <id>P51532-3</id>
        <name>3</name>
        <sequence type="described" ref="VSP_043137 VSP_043677 VSP_043678"/>
    </isoform>
    <isoform>
        <id>P51532-4</id>
        <name>4</name>
        <sequence type="described" ref="VSP_043137 VSP_043677"/>
    </isoform>
    <isoform>
        <id>P51532-5</id>
        <name>5</name>
        <sequence type="described" ref="VSP_043137 VSP_043678"/>
    </isoform>
</comment>
<comment type="tissue specificity">
    <text evidence="21">Colocalizes with ZEB1 in E-cadherin-negative cells from established lines, and stroma of normal colon as well as in de-differentiated epithelial cells at the invasion front of colorectal carcinomas (at protein level).</text>
</comment>
<comment type="domain">
    <text evidence="27">The KIKL motif recognizes and binds the NET domain of BRD3.</text>
</comment>
<comment type="disease" evidence="20">
    <disease id="DI-02895">
        <name>Rhabdoid tumor predisposition syndrome 2</name>
        <acronym>RTPS2</acronym>
        <description>A familial cancer syndrome predisposing to renal or extrarenal malignant rhabdoid tumors and to a variety of tumors of the central nervous system, including choroid plexus carcinoma, medulloblastoma, and central primitive neuroectodermal tumors. Rhabdoid tumors are the most aggressive and lethal malignancies occurring in early childhood.</description>
        <dbReference type="MIM" id="613325"/>
    </disease>
    <text>The disease is caused by variants affecting the gene represented in this entry.</text>
</comment>
<comment type="disease" evidence="23">
    <disease id="DI-03455">
        <name>Coffin-Siris syndrome 4</name>
        <acronym>CSS4</acronym>
        <description>A form of Coffin-Siris syndrome, a congenital multiple malformation syndrome with broad phenotypic and genetic variability. Cardinal features are intellectual disability, coarse facial features, hypertrichosis, and hypoplastic or absent fifth digit nails or phalanges. Additional features include malformations of the cardiac, gastrointestinal, genitourinary, and/or central nervous systems. Sucking/feeding difficulties, poor growth, ophthalmologic abnormalities, hearing impairment, and spinal anomalies are common findings. Both autosomal dominant and autosomal recessive inheritance patterns have been reported.</description>
        <dbReference type="MIM" id="614609"/>
    </disease>
    <text>The disease is caused by variants affecting the gene represented in this entry.</text>
</comment>
<comment type="disease" evidence="30">
    <disease id="DI-06878">
        <name>Otosclerosis 12</name>
        <acronym>OTSC12</acronym>
        <description>A form of otosclerosis, a pathological condition of the ear characterized by formation of spongy bone in the labyrinth capsule, especially in front of and posterior to the footplate of the stapes, resulting in conductive hearing impairment. Cochlear otosclerosis may also develop, resulting in sensorineural hearing loss. OTSC12 is an autosomal dominant form with incomplete penetrance.</description>
        <dbReference type="MIM" id="620792"/>
    </disease>
    <text>The disease is caused by variants affecting the gene represented in this entry.</text>
</comment>
<comment type="similarity">
    <text evidence="37">Belongs to the SNF2/RAD54 helicase family.</text>
</comment>
<comment type="caution">
    <text evidence="34 35">Like other proteins within the SNF2 family, they do not possess helicase activity but instead remodel chromatin via an ATP-dependent translocation mechanism.</text>
</comment>
<comment type="online information" name="Atlas of Genetics and Cytogenetics in Oncology and Haematology">
    <link uri="https://atlasgeneticsoncology.org/gene/42333/smarca4"/>
</comment>
<comment type="online information" name="Mendelian genes SWI/SNF related, matrix associated, actin dependent regulator of chromatin, subfamily a, member 4 (SMARCA4)">
    <link uri="https://databases.lovd.nl/shared/genes/SMARCA4"/>
    <text>Leiden Open Variation Database (LOVD)</text>
</comment>
<keyword id="KW-0002">3D-structure</keyword>
<keyword id="KW-0007">Acetylation</keyword>
<keyword id="KW-0010">Activator</keyword>
<keyword id="KW-0025">Alternative splicing</keyword>
<keyword id="KW-0103">Bromodomain</keyword>
<keyword id="KW-0156">Chromatin regulator</keyword>
<keyword id="KW-0209">Deafness</keyword>
<keyword id="KW-0225">Disease variant</keyword>
<keyword id="KW-0378">Hydrolase</keyword>
<keyword id="KW-0991">Intellectual disability</keyword>
<keyword id="KW-1017">Isopeptide bond</keyword>
<keyword id="KW-0524">Neurogenesis</keyword>
<keyword id="KW-0539">Nucleus</keyword>
<keyword id="KW-0597">Phosphoprotein</keyword>
<keyword id="KW-1267">Proteomics identification</keyword>
<keyword id="KW-1185">Reference proteome</keyword>
<keyword id="KW-0678">Repressor</keyword>
<keyword id="KW-0694">RNA-binding</keyword>
<keyword id="KW-0804">Transcription</keyword>
<keyword id="KW-0805">Transcription regulation</keyword>
<keyword id="KW-0832">Ubl conjugation</keyword>
<protein>
    <recommendedName>
        <fullName evidence="37">SWI/SNF-related matrix-associated actin-dependent regulator of chromatin subfamily A member 4</fullName>
        <shortName evidence="33">SMARCA4</shortName>
        <ecNumber evidence="28">3.6.4.-</ecNumber>
    </recommendedName>
    <alternativeName>
        <fullName>BRG1-associated factor 190A</fullName>
        <shortName>BAF190A</shortName>
    </alternativeName>
    <alternativeName>
        <fullName>Mitotic growth and transcription activator</fullName>
    </alternativeName>
    <alternativeName>
        <fullName>Protein BRG-1</fullName>
    </alternativeName>
    <alternativeName>
        <fullName>Protein brahma homolog 1</fullName>
    </alternativeName>
    <alternativeName>
        <fullName>SNF2-beta</fullName>
    </alternativeName>
    <alternativeName>
        <fullName>Transcription activator BRG1</fullName>
    </alternativeName>
</protein>
<name>SMCA4_HUMAN</name>